<accession>P20434</accession>
<accession>D6VQE9</accession>
<accession>Q02121</accession>
<keyword id="KW-0002">3D-structure</keyword>
<keyword id="KW-0238">DNA-binding</keyword>
<keyword id="KW-0240">DNA-directed RNA polymerase</keyword>
<keyword id="KW-0539">Nucleus</keyword>
<keyword id="KW-1185">Reference proteome</keyword>
<keyword id="KW-0690">Ribosome biogenesis</keyword>
<keyword id="KW-0804">Transcription</keyword>
<reference key="1">
    <citation type="journal article" date="1990" name="Genes Dev.">
        <title>Subunits shared by eukaryotic nuclear RNA polymerases.</title>
        <authorList>
            <person name="Woychik N.A."/>
            <person name="Liao S.-M."/>
            <person name="Kolodziej P.A."/>
            <person name="Young R.A."/>
        </authorList>
    </citation>
    <scope>NUCLEOTIDE SEQUENCE [GENOMIC DNA]</scope>
</reference>
<reference key="2">
    <citation type="journal article" date="1993" name="Yeast">
        <title>Sequence of a 4.8 kb fragment of Saccharomyces cerevisiae chromosome II including three essential open reading frames.</title>
        <authorList>
            <person name="Baur A."/>
            <person name="Schaaff-Gerstenschlaeger I."/>
            <person name="Boles E."/>
            <person name="Miosga T."/>
            <person name="Rose M."/>
            <person name="Zimmermann F.K."/>
        </authorList>
    </citation>
    <scope>NUCLEOTIDE SEQUENCE [GENOMIC DNA]</scope>
    <source>
        <strain>ATCC 204508 / S288c</strain>
    </source>
</reference>
<reference key="3">
    <citation type="journal article" date="1994" name="EMBO J.">
        <title>Complete DNA sequence of yeast chromosome II.</title>
        <authorList>
            <person name="Feldmann H."/>
            <person name="Aigle M."/>
            <person name="Aljinovic G."/>
            <person name="Andre B."/>
            <person name="Baclet M.C."/>
            <person name="Barthe C."/>
            <person name="Baur A."/>
            <person name="Becam A.-M."/>
            <person name="Biteau N."/>
            <person name="Boles E."/>
            <person name="Brandt T."/>
            <person name="Brendel M."/>
            <person name="Brueckner M."/>
            <person name="Bussereau F."/>
            <person name="Christiansen C."/>
            <person name="Contreras R."/>
            <person name="Crouzet M."/>
            <person name="Cziepluch C."/>
            <person name="Demolis N."/>
            <person name="Delaveau T."/>
            <person name="Doignon F."/>
            <person name="Domdey H."/>
            <person name="Duesterhus S."/>
            <person name="Dubois E."/>
            <person name="Dujon B."/>
            <person name="El Bakkoury M."/>
            <person name="Entian K.-D."/>
            <person name="Feuermann M."/>
            <person name="Fiers W."/>
            <person name="Fobo G.M."/>
            <person name="Fritz C."/>
            <person name="Gassenhuber J."/>
            <person name="Glansdorff N."/>
            <person name="Goffeau A."/>
            <person name="Grivell L.A."/>
            <person name="de Haan M."/>
            <person name="Hein C."/>
            <person name="Herbert C.J."/>
            <person name="Hollenberg C.P."/>
            <person name="Holmstroem K."/>
            <person name="Jacq C."/>
            <person name="Jacquet M."/>
            <person name="Jauniaux J.-C."/>
            <person name="Jonniaux J.-L."/>
            <person name="Kallesoee T."/>
            <person name="Kiesau P."/>
            <person name="Kirchrath L."/>
            <person name="Koetter P."/>
            <person name="Korol S."/>
            <person name="Liebl S."/>
            <person name="Logghe M."/>
            <person name="Lohan A.J.E."/>
            <person name="Louis E.J."/>
            <person name="Li Z.Y."/>
            <person name="Maat M.J."/>
            <person name="Mallet L."/>
            <person name="Mannhaupt G."/>
            <person name="Messenguy F."/>
            <person name="Miosga T."/>
            <person name="Molemans F."/>
            <person name="Mueller S."/>
            <person name="Nasr F."/>
            <person name="Obermaier B."/>
            <person name="Perea J."/>
            <person name="Pierard A."/>
            <person name="Piravandi E."/>
            <person name="Pohl F.M."/>
            <person name="Pohl T.M."/>
            <person name="Potier S."/>
            <person name="Proft M."/>
            <person name="Purnelle B."/>
            <person name="Ramezani Rad M."/>
            <person name="Rieger M."/>
            <person name="Rose M."/>
            <person name="Schaaff-Gerstenschlaeger I."/>
            <person name="Scherens B."/>
            <person name="Schwarzlose C."/>
            <person name="Skala J."/>
            <person name="Slonimski P.P."/>
            <person name="Smits P.H.M."/>
            <person name="Souciet J.-L."/>
            <person name="Steensma H.Y."/>
            <person name="Stucka R."/>
            <person name="Urrestarazu L.A."/>
            <person name="van der Aart Q.J.M."/>
            <person name="Van Dyck L."/>
            <person name="Vassarotti A."/>
            <person name="Vetter I."/>
            <person name="Vierendeels F."/>
            <person name="Vissers S."/>
            <person name="Wagner G."/>
            <person name="de Wergifosse P."/>
            <person name="Wolfe K.H."/>
            <person name="Zagulski M."/>
            <person name="Zimmermann F.K."/>
            <person name="Mewes H.-W."/>
            <person name="Kleine K."/>
        </authorList>
    </citation>
    <scope>NUCLEOTIDE SEQUENCE [LARGE SCALE GENOMIC DNA]</scope>
    <source>
        <strain>ATCC 204508 / S288c</strain>
    </source>
</reference>
<reference key="4">
    <citation type="journal article" date="2014" name="G3 (Bethesda)">
        <title>The reference genome sequence of Saccharomyces cerevisiae: Then and now.</title>
        <authorList>
            <person name="Engel S.R."/>
            <person name="Dietrich F.S."/>
            <person name="Fisk D.G."/>
            <person name="Binkley G."/>
            <person name="Balakrishnan R."/>
            <person name="Costanzo M.C."/>
            <person name="Dwight S.S."/>
            <person name="Hitz B.C."/>
            <person name="Karra K."/>
            <person name="Nash R.S."/>
            <person name="Weng S."/>
            <person name="Wong E.D."/>
            <person name="Lloyd P."/>
            <person name="Skrzypek M.S."/>
            <person name="Miyasato S.R."/>
            <person name="Simison M."/>
            <person name="Cherry J.M."/>
        </authorList>
    </citation>
    <scope>GENOME REANNOTATION</scope>
    <source>
        <strain>ATCC 204508 / S288c</strain>
    </source>
</reference>
<reference key="5">
    <citation type="journal article" date="1998" name="Cold Spring Harb. Symp. Quant. Biol.">
        <title>The yeast RNA polymerase III transcription machinery: a paradigm for eukaryotic gene activation.</title>
        <authorList>
            <person name="Chedin S."/>
            <person name="Ferri M.L."/>
            <person name="Peyroche G."/>
            <person name="Andrau J.-C."/>
            <person name="Jourdain S."/>
            <person name="Lefebvre O."/>
            <person name="Werner M."/>
            <person name="Carles C."/>
            <person name="Sentenac A."/>
        </authorList>
    </citation>
    <scope>REVIEW ON THE RNA POL III COMPLEX</scope>
</reference>
<reference key="6">
    <citation type="journal article" date="2001" name="Proc. Natl. Acad. Sci. U.S.A.">
        <title>Differential roles of phosphorylation in the formation of transcriptional active RNA polymerase I.</title>
        <authorList>
            <person name="Fath S."/>
            <person name="Milkereit P."/>
            <person name="Peyroche G."/>
            <person name="Riva M."/>
            <person name="Carles C."/>
            <person name="Tschochner H."/>
        </authorList>
    </citation>
    <scope>IDENTIFICATION IN THE RNA POL I COMPLEX</scope>
</reference>
<reference key="7">
    <citation type="journal article" date="2002" name="Mol. Microbiol.">
        <title>Rpa12p, a conserved RNA polymerase I subunit with two functional domains.</title>
        <authorList>
            <person name="Van Mullem V."/>
            <person name="Landrieux E."/>
            <person name="Vandenhaute J."/>
            <person name="Thuriaux P."/>
        </authorList>
    </citation>
    <scope>IDENTIFICATION IN THE RNA POL I COMPLEX</scope>
</reference>
<reference key="8">
    <citation type="journal article" date="2002" name="Proc. Natl. Acad. Sci. U.S.A.">
        <title>The A14-A43 heterodimer subunit in yeast RNA pol I and their relationship to Rpb4-Rpb7 pol II subunits.</title>
        <authorList>
            <person name="Peyroche G."/>
            <person name="Levillain E."/>
            <person name="Siaut M."/>
            <person name="Callebaut I."/>
            <person name="Schultz P."/>
            <person name="Sentenac A."/>
            <person name="Riva M."/>
            <person name="Carles C."/>
        </authorList>
    </citation>
    <scope>IDENTIFICATION IN THE RNA POL I COMPLEX</scope>
</reference>
<reference key="9">
    <citation type="journal article" date="2000" name="Proc. Natl. Acad. Sci. U.S.A.">
        <title>Crystal structure of RPB5, a universal eukaryotic RNA polymerase subunit and transcription factor interaction target.</title>
        <authorList>
            <person name="Todone F."/>
            <person name="Weinzierl R.O.J."/>
            <person name="Brick P."/>
            <person name="Onesti S."/>
        </authorList>
    </citation>
    <scope>X-RAY CRYSTALLOGRAPHY (1.9 ANGSTROMS)</scope>
</reference>
<reference key="10">
    <citation type="journal article" date="2003" name="Mol. Cell">
        <title>RNA polymerase II/TFIIF structure and conserved organization of the initiation complex.</title>
        <authorList>
            <person name="Chung W.H."/>
            <person name="Craighead J.L."/>
            <person name="Chang W.H."/>
            <person name="Ezeokonkwo C."/>
            <person name="Bareket-Samish A."/>
            <person name="Kornberg R.D."/>
            <person name="Asturias F.J."/>
        </authorList>
    </citation>
    <scope>ELECTRON MICROSCOPY OF THE RNA POL II/TFIIF COMPLEX</scope>
</reference>
<reference key="11">
    <citation type="journal article" date="2001" name="Science">
        <title>Structural basis of transcription: RNA polymerase II at 2.8 A resolution.</title>
        <authorList>
            <person name="Cramer P."/>
            <person name="Bushnell D.A."/>
            <person name="Kornberg R.D."/>
        </authorList>
    </citation>
    <scope>X-RAY CRYSTALLOGRAPHY (2.8 ANGSTROMS) OF THE RNA POL II CORE COMPLEX</scope>
</reference>
<reference key="12">
    <citation type="journal article" date="2001" name="Science">
        <title>Structural basis of transcription: an RNA polymerase II elongation complex at 3.3 A resolution.</title>
        <authorList>
            <person name="Gnatt A.L."/>
            <person name="Cramer P."/>
            <person name="Fu J."/>
            <person name="Bushnell D.A."/>
            <person name="Kornberg R.D."/>
        </authorList>
    </citation>
    <scope>X-RAY CRYSTALLOGRAPHY (3.3 ANGSTROMS) OF THE RNA POL II CORE COMPLEX</scope>
</reference>
<reference key="13">
    <citation type="journal article" date="2002" name="Proc. Natl. Acad. Sci. U.S.A.">
        <title>Structural basis of transcription: alpha-amanitin-RNA polymerase II cocrystal at 2.8 A resolution.</title>
        <authorList>
            <person name="Bushnell D.A."/>
            <person name="Cramer P."/>
            <person name="Kornberg R.D."/>
        </authorList>
    </citation>
    <scope>X-RAY CRYSTALLOGRAPHY (2.8 ANGSTROMS) OF THE RNA POL II CORE COMPLEX IN COMPLEX WITH ALPHA-AMANITIN</scope>
</reference>
<reference key="14">
    <citation type="journal article" date="2003" name="Cell">
        <title>Architecture of the RNA polymerase II-TFIIS complex and implications for mRNA cleavage.</title>
        <authorList>
            <person name="Kettenberger H."/>
            <person name="Armache K.J."/>
            <person name="Cramer P."/>
        </authorList>
    </citation>
    <scope>X-RAY CRYSTALLOGRAPHY (3.8 ANGSTROMS) OF THE RNA POL II COMPLEX IN COMPLEX WITH DST1</scope>
</reference>
<reference key="15">
    <citation type="journal article" date="2003" name="Proc. Natl. Acad. Sci. U.S.A.">
        <title>Architecture of initiation-competent 12-subunit RNA polymerase II.</title>
        <authorList>
            <person name="Armache K.J."/>
            <person name="Kettenberger H."/>
            <person name="Cramer P."/>
        </authorList>
    </citation>
    <scope>X-RAY CRYSTALLOGRAPHY (4.2 ANGSTROMS) OF THE RNA POL II COMPLEX</scope>
</reference>
<reference key="16">
    <citation type="journal article" date="2003" name="Proc. Natl. Acad. Sci. U.S.A.">
        <title>Complete, 12-subunit RNA polymerase II at 4.1-A resolution: implications for the initiation of transcription.</title>
        <authorList>
            <person name="Bushnell D.A."/>
            <person name="Kornberg R.D."/>
        </authorList>
    </citation>
    <scope>X-RAY CRYSTALLOGRAPHY (4.1 ANGSTROMS) OF THE RNA POL II CORE COMPLEX</scope>
</reference>
<reference key="17">
    <citation type="journal article" date="2004" name="Cell">
        <title>Structural basis of transcription: nucleotide selection by rotation in the RNA polymerase II active center.</title>
        <authorList>
            <person name="Westover K.D."/>
            <person name="Bushnell D.A."/>
            <person name="Kornberg R.D."/>
        </authorList>
    </citation>
    <scope>X-RAY CRYSTALLOGRAPHY (2.3 ANGSTROMS) OF THE RNA POL II CORE COMPLEX</scope>
</reference>
<reference key="18">
    <citation type="journal article" date="2004" name="Mol. Cell">
        <title>Complete RNA polymerase II elongation complex structure and its interactions with NTP and TFIIS.</title>
        <authorList>
            <person name="Kettenberger H."/>
            <person name="Armache K.J."/>
            <person name="Cramer P."/>
        </authorList>
    </citation>
    <scope>X-RAY CRYSTALLOGRAPHY (4.5 ANGSTROMS)</scope>
</reference>
<reference key="19">
    <citation type="journal article" date="2004" name="Science">
        <title>Structural basis of transcription: an RNA polymerase II-TFIIB cocrystal at 4.5 Angstroms.</title>
        <authorList>
            <person name="Bushnell D.A."/>
            <person name="Westover K.D."/>
            <person name="Davis R.E."/>
            <person name="Kornberg R.D."/>
        </authorList>
    </citation>
    <scope>X-RAY CRYSTALLOGRAPHY (4.5 ANGSTROMS) OF THE RNA POL II CORE COMPLEX</scope>
</reference>
<reference key="20">
    <citation type="journal article" date="2005" name="J. Biol. Chem.">
        <title>Structures of complete RNA polymerase II and its subcomplex, Rpb4/7.</title>
        <authorList>
            <person name="Armache K.J."/>
            <person name="Mitterweger S."/>
            <person name="Meinhart A."/>
            <person name="Cramer P."/>
        </authorList>
    </citation>
    <scope>X-RAY CRYSTALLOGRAPHY (3.8 ANGSTROMS) OF THE RNA POL II COMPLEX</scope>
</reference>
<reference key="21">
    <citation type="journal article" date="2006" name="Mol. Cell">
        <title>Structural biology of RNA polymerase III: subcomplex C17/25 X-ray structure and 11 subunit enzyme model.</title>
        <authorList>
            <person name="Jasiak A.J."/>
            <person name="Armache K.J."/>
            <person name="Martens B."/>
            <person name="Jansen R.P."/>
            <person name="Cramer P."/>
        </authorList>
    </citation>
    <scope>3D-STRUCTURE MODELING OF THE POL III CORE COMPLEX</scope>
</reference>
<reference key="22">
    <citation type="journal article" date="2006" name="Nat. Struct. Mol. Biol.">
        <title>Structure of an RNA polymerase II-RNA inhibitor complex elucidates transcription regulation by noncoding RNAs.</title>
        <authorList>
            <person name="Kettenberger H."/>
            <person name="Eisenfuhr A."/>
            <person name="Brueckner F."/>
            <person name="Theis M."/>
            <person name="Famulok M."/>
            <person name="Cramer P."/>
        </authorList>
    </citation>
    <scope>X-RAY CRYSTALLOGRAPHY (3.8 ANGSTROMS) OF THE RNA POL II COMPLEX IN COMPLEX WITH INHIBITING NON-CODING RNA</scope>
</reference>
<reference key="23">
    <citation type="journal article" date="2006" name="Structure">
        <title>Phasing RNA polymerase II using intrinsically bound Zn atoms: an updated structural model.</title>
        <authorList>
            <person name="Meyer P.A."/>
            <person name="Ye P."/>
            <person name="Zhang M."/>
            <person name="Suh M.H."/>
            <person name="Fu J."/>
        </authorList>
    </citation>
    <scope>X-RAY CRYSTALLOGRAPHY (4.15 ANGSTROMS) OF THE RNA POL II COMPLEX</scope>
</reference>
<reference key="24">
    <citation type="journal article" date="2007" name="Cell">
        <title>Functional architecture of RNA polymerase I.</title>
        <authorList>
            <person name="Kuhn C.D."/>
            <person name="Geiger S.R."/>
            <person name="Baumli S."/>
            <person name="Gartmann M."/>
            <person name="Gerber J."/>
            <person name="Jennebach S."/>
            <person name="Mielke T."/>
            <person name="Tschochner H."/>
            <person name="Beckmann R."/>
            <person name="Cramer P."/>
        </authorList>
    </citation>
    <scope>STRUCTURE BY ELECTRON MICROSCOPY (12.00 ANGSTROMS) OF THE POL I COMPLEX</scope>
    <scope>FUNCTION</scope>
    <scope>SUBUNIT</scope>
</reference>
<reference key="25">
    <citation type="journal article" date="2013" name="Nature">
        <title>Crystal structure of the 14-subunit RNA polymerase I.</title>
        <authorList>
            <person name="Fernandez-Tornero C."/>
            <person name="Moreno-Morcillo M."/>
            <person name="Rashid U.J."/>
            <person name="Taylor N.M."/>
            <person name="Ruiz F.M."/>
            <person name="Gruene T."/>
            <person name="Legrand P."/>
            <person name="Steuerwald U."/>
            <person name="Muller C.W."/>
        </authorList>
    </citation>
    <scope>X-RAY CRYSTALLOGRAPHY (3.0 ANGSTROMS) OF THE POL I COMPLEX</scope>
    <scope>FUNCTION</scope>
    <scope>SUBUNIT</scope>
</reference>
<reference key="26">
    <citation type="journal article" date="2013" name="Nature">
        <title>RNA polymerase I structure and transcription regulation.</title>
        <authorList>
            <person name="Engel C."/>
            <person name="Sainsbury S."/>
            <person name="Cheung A.C."/>
            <person name="Kostrewa D."/>
            <person name="Cramer P."/>
        </authorList>
    </citation>
    <scope>X-RAY CRYSTALLOGRAPHY (2.8 ANGSTROMS) OF THE POL I COMPLEX</scope>
    <scope>FUNCTION</scope>
    <scope>SUBUNIT</scope>
</reference>
<name>RPAB1_YEAST</name>
<sequence length="215" mass="25079">MDQENERNISRLWRAFRTVKEMVKDRGYFITQEEVELPLEDFKAKYCDSMGRPQRKMMSFQANPTEESISKFPDMGSLWVEFCDEPSVGVKTMKTFVIHIQEKNFQTGIFVYQNNITPSAMKLVPSIPPATIETFNEAALVVNITHHELVPKHIRLSSDEKRELLKRYRLKESQLPRIQRADPVALYLGLKRGEVVKIIRKSETSGRYASYRICM</sequence>
<proteinExistence type="evidence at protein level"/>
<gene>
    <name type="primary">RPB5</name>
    <name type="synonym">RPA7</name>
    <name type="synonym">RPC9</name>
    <name type="ordered locus">YBR154C</name>
    <name type="ORF">YBR1204</name>
</gene>
<evidence type="ECO:0000269" key="1">
    <source>
    </source>
</evidence>
<evidence type="ECO:0000269" key="2">
    <source>
    </source>
</evidence>
<evidence type="ECO:0000269" key="3">
    <source>
    </source>
</evidence>
<evidence type="ECO:0000269" key="4">
    <source>
    </source>
</evidence>
<evidence type="ECO:0000269" key="5">
    <source>
    </source>
</evidence>
<evidence type="ECO:0000269" key="6">
    <source>
    </source>
</evidence>
<evidence type="ECO:0000269" key="7">
    <source>
    </source>
</evidence>
<evidence type="ECO:0000269" key="8">
    <source>
    </source>
</evidence>
<evidence type="ECO:0000269" key="9">
    <source>
    </source>
</evidence>
<evidence type="ECO:0000305" key="10"/>
<evidence type="ECO:0007829" key="11">
    <source>
        <dbReference type="PDB" id="1DZF"/>
    </source>
</evidence>
<evidence type="ECO:0007829" key="12">
    <source>
        <dbReference type="PDB" id="1TWC"/>
    </source>
</evidence>
<evidence type="ECO:0007829" key="13">
    <source>
        <dbReference type="PDB" id="2NVQ"/>
    </source>
</evidence>
<evidence type="ECO:0007829" key="14">
    <source>
        <dbReference type="PDB" id="2NVY"/>
    </source>
</evidence>
<evidence type="ECO:0007829" key="15">
    <source>
        <dbReference type="PDB" id="6HLR"/>
    </source>
</evidence>
<evidence type="ECO:0007829" key="16">
    <source>
        <dbReference type="PDB" id="7NKX"/>
    </source>
</evidence>
<evidence type="ECO:0007829" key="17">
    <source>
        <dbReference type="PDB" id="8JCH"/>
    </source>
</evidence>
<organism>
    <name type="scientific">Saccharomyces cerevisiae (strain ATCC 204508 / S288c)</name>
    <name type="common">Baker's yeast</name>
    <dbReference type="NCBI Taxonomy" id="559292"/>
    <lineage>
        <taxon>Eukaryota</taxon>
        <taxon>Fungi</taxon>
        <taxon>Dikarya</taxon>
        <taxon>Ascomycota</taxon>
        <taxon>Saccharomycotina</taxon>
        <taxon>Saccharomycetes</taxon>
        <taxon>Saccharomycetales</taxon>
        <taxon>Saccharomycetaceae</taxon>
        <taxon>Saccharomyces</taxon>
    </lineage>
</organism>
<comment type="function">
    <text evidence="7 8 9">DNA-dependent RNA polymerases catalyze the transcription of DNA into RNA using the four ribonucleoside triphosphates as substrates. Common component of RNA polymerases I, II and III which synthesize ribosomal RNA precursors, mRNA precursors and many functional non-coding RNAs, and small RNAs, such as 5S rRNA and tRNAs, respectively. Pol II is the central component of the basal RNA polymerase II transcription machinery. RNA polymerase complexes are composed of mobile elements that move relative to each other. In Pol II, RPB5 is part of the lower jaw surrounding the central large cleft and thought to grab the incoming DNA template. Seems to be the major component in this process.</text>
</comment>
<comment type="subunit">
    <text evidence="1 2 3 4 5 6 7 8 9">Component of the RNA polymerase I (Pol I), RNA polymerase II (Pol II) and RNA polymerase III (Pol III) complexes. Component of the RNA polymerase I (Pol I) complex consisting of 14 subunits: RPA135, RPA190, RPC40, RPA14, RPB5, RPO26, RPA43, RPB8, RPA12, RPB10, RPC19, RPC10, RPA49 and RPA34. The complex is composed of a horseshoe-shaped core containing ten subunits (RPA135, RPA190, RPB5, RPO26, RPB8, RPB10, RPC10, RPA12, RPC19 and RPC40) where RPA135 and RPA190 form the DNA-binding cleft. Outside of the core, RPA14 and RPA43 form the stalk that mediates interactions with transcription initiation factors and newly synthesized RNA. Component of the RNA polymerase II (Pol II) complex consisting of 12 subunits: RPO21, RPB2, RPB3, RPB4, RPB5, RPO26, RPB7, RPB8, RPB9, RPB10 and RPC10. Component of the RNA polymerase III (Pol III) complex consisting of 17 subunits.</text>
</comment>
<comment type="interaction">
    <interactant intactId="EBI-15781">
        <id>P20434</id>
    </interactant>
    <interactant intactId="EBI-15736">
        <id>P22138</id>
        <label>RPA135</label>
    </interactant>
    <organismsDiffer>false</organismsDiffer>
    <experiments>3</experiments>
</comment>
<comment type="interaction">
    <interactant intactId="EBI-15781">
        <id>P20434</id>
    </interactant>
    <interactant intactId="EBI-15767">
        <id>P08518</id>
        <label>RPB2</label>
    </interactant>
    <organismsDiffer>false</organismsDiffer>
    <experiments>26</experiments>
</comment>
<comment type="interaction">
    <interactant intactId="EBI-15781">
        <id>P20434</id>
    </interactant>
    <interactant intactId="EBI-15794">
        <id>P20436</id>
        <label>RPB8</label>
    </interactant>
    <organismsDiffer>false</organismsDiffer>
    <experiments>32</experiments>
</comment>
<comment type="interaction">
    <interactant intactId="EBI-15781">
        <id>P20434</id>
    </interactant>
    <interactant intactId="EBI-19123">
        <id>P29055</id>
        <label>SUA7</label>
    </interactant>
    <organismsDiffer>false</organismsDiffer>
    <experiments>4</experiments>
</comment>
<comment type="subcellular location">
    <subcellularLocation>
        <location>Nucleus</location>
    </subcellularLocation>
</comment>
<comment type="similarity">
    <text evidence="10">Belongs to the archaeal Rpo5/eukaryotic RPB5 RNA polymerase subunit family.</text>
</comment>
<dbReference type="EMBL" id="X53287">
    <property type="protein sequence ID" value="CAA37381.1"/>
    <property type="molecule type" value="Genomic_DNA"/>
</dbReference>
<dbReference type="EMBL" id="X71329">
    <property type="protein sequence ID" value="CAA50472.1"/>
    <property type="molecule type" value="Genomic_DNA"/>
</dbReference>
<dbReference type="EMBL" id="S59774">
    <property type="protein sequence ID" value="AAC60556.1"/>
    <property type="molecule type" value="Genomic_DNA"/>
</dbReference>
<dbReference type="EMBL" id="Z36023">
    <property type="protein sequence ID" value="CAA85113.1"/>
    <property type="molecule type" value="Genomic_DNA"/>
</dbReference>
<dbReference type="EMBL" id="BK006936">
    <property type="protein sequence ID" value="DAA07269.1"/>
    <property type="molecule type" value="Genomic_DNA"/>
</dbReference>
<dbReference type="PIR" id="A34588">
    <property type="entry name" value="A34588"/>
</dbReference>
<dbReference type="RefSeq" id="NP_009712.1">
    <property type="nucleotide sequence ID" value="NM_001178502.1"/>
</dbReference>
<dbReference type="PDB" id="1DZF">
    <property type="method" value="X-ray"/>
    <property type="resolution" value="1.90 A"/>
    <property type="chains" value="A=1-215"/>
</dbReference>
<dbReference type="PDB" id="1I3Q">
    <property type="method" value="X-ray"/>
    <property type="resolution" value="3.10 A"/>
    <property type="chains" value="E=1-215"/>
</dbReference>
<dbReference type="PDB" id="1I50">
    <property type="method" value="X-ray"/>
    <property type="resolution" value="2.80 A"/>
    <property type="chains" value="E=1-215"/>
</dbReference>
<dbReference type="PDB" id="1I6H">
    <property type="method" value="X-ray"/>
    <property type="resolution" value="3.30 A"/>
    <property type="chains" value="E=1-215"/>
</dbReference>
<dbReference type="PDB" id="1K83">
    <property type="method" value="X-ray"/>
    <property type="resolution" value="2.80 A"/>
    <property type="chains" value="E=1-215"/>
</dbReference>
<dbReference type="PDB" id="1NIK">
    <property type="method" value="X-ray"/>
    <property type="resolution" value="4.10 A"/>
    <property type="chains" value="E=1-215"/>
</dbReference>
<dbReference type="PDB" id="1NT9">
    <property type="method" value="X-ray"/>
    <property type="resolution" value="4.20 A"/>
    <property type="chains" value="E=1-215"/>
</dbReference>
<dbReference type="PDB" id="1PQV">
    <property type="method" value="X-ray"/>
    <property type="resolution" value="3.80 A"/>
    <property type="chains" value="E=1-215"/>
</dbReference>
<dbReference type="PDB" id="1R5U">
    <property type="method" value="X-ray"/>
    <property type="resolution" value="4.50 A"/>
    <property type="chains" value="E=1-215"/>
</dbReference>
<dbReference type="PDB" id="1R9S">
    <property type="method" value="X-ray"/>
    <property type="resolution" value="4.25 A"/>
    <property type="chains" value="E=1-215"/>
</dbReference>
<dbReference type="PDB" id="1R9T">
    <property type="method" value="X-ray"/>
    <property type="resolution" value="3.50 A"/>
    <property type="chains" value="E=1-215"/>
</dbReference>
<dbReference type="PDB" id="1SFO">
    <property type="method" value="X-ray"/>
    <property type="resolution" value="3.61 A"/>
    <property type="chains" value="E=1-215"/>
</dbReference>
<dbReference type="PDB" id="1TWA">
    <property type="method" value="X-ray"/>
    <property type="resolution" value="3.20 A"/>
    <property type="chains" value="E=1-215"/>
</dbReference>
<dbReference type="PDB" id="1TWC">
    <property type="method" value="X-ray"/>
    <property type="resolution" value="3.00 A"/>
    <property type="chains" value="E=1-215"/>
</dbReference>
<dbReference type="PDB" id="1TWF">
    <property type="method" value="X-ray"/>
    <property type="resolution" value="2.30 A"/>
    <property type="chains" value="E=1-215"/>
</dbReference>
<dbReference type="PDB" id="1TWG">
    <property type="method" value="X-ray"/>
    <property type="resolution" value="3.30 A"/>
    <property type="chains" value="E=1-215"/>
</dbReference>
<dbReference type="PDB" id="1TWH">
    <property type="method" value="X-ray"/>
    <property type="resolution" value="3.40 A"/>
    <property type="chains" value="E=1-215"/>
</dbReference>
<dbReference type="PDB" id="1WCM">
    <property type="method" value="X-ray"/>
    <property type="resolution" value="3.80 A"/>
    <property type="chains" value="E=1-215"/>
</dbReference>
<dbReference type="PDB" id="1Y1V">
    <property type="method" value="X-ray"/>
    <property type="resolution" value="3.80 A"/>
    <property type="chains" value="E=1-215"/>
</dbReference>
<dbReference type="PDB" id="1Y1W">
    <property type="method" value="X-ray"/>
    <property type="resolution" value="4.00 A"/>
    <property type="chains" value="E=1-215"/>
</dbReference>
<dbReference type="PDB" id="1Y1Y">
    <property type="method" value="X-ray"/>
    <property type="resolution" value="4.00 A"/>
    <property type="chains" value="E=1-215"/>
</dbReference>
<dbReference type="PDB" id="1Y77">
    <property type="method" value="X-ray"/>
    <property type="resolution" value="4.50 A"/>
    <property type="chains" value="E=1-215"/>
</dbReference>
<dbReference type="PDB" id="2B63">
    <property type="method" value="X-ray"/>
    <property type="resolution" value="3.80 A"/>
    <property type="chains" value="E=1-215"/>
</dbReference>
<dbReference type="PDB" id="2B8K">
    <property type="method" value="X-ray"/>
    <property type="resolution" value="4.15 A"/>
    <property type="chains" value="E=1-215"/>
</dbReference>
<dbReference type="PDB" id="2E2H">
    <property type="method" value="X-ray"/>
    <property type="resolution" value="3.95 A"/>
    <property type="chains" value="E=1-215"/>
</dbReference>
<dbReference type="PDB" id="2E2I">
    <property type="method" value="X-ray"/>
    <property type="resolution" value="3.41 A"/>
    <property type="chains" value="E=1-215"/>
</dbReference>
<dbReference type="PDB" id="2E2J">
    <property type="method" value="X-ray"/>
    <property type="resolution" value="3.50 A"/>
    <property type="chains" value="E=1-215"/>
</dbReference>
<dbReference type="PDB" id="2JA5">
    <property type="method" value="X-ray"/>
    <property type="resolution" value="3.80 A"/>
    <property type="chains" value="E=1-215"/>
</dbReference>
<dbReference type="PDB" id="2JA6">
    <property type="method" value="X-ray"/>
    <property type="resolution" value="4.00 A"/>
    <property type="chains" value="E=1-215"/>
</dbReference>
<dbReference type="PDB" id="2JA7">
    <property type="method" value="X-ray"/>
    <property type="resolution" value="3.80 A"/>
    <property type="chains" value="E/Q=1-215"/>
</dbReference>
<dbReference type="PDB" id="2JA8">
    <property type="method" value="X-ray"/>
    <property type="resolution" value="3.80 A"/>
    <property type="chains" value="E=1-215"/>
</dbReference>
<dbReference type="PDB" id="2NVQ">
    <property type="method" value="X-ray"/>
    <property type="resolution" value="2.90 A"/>
    <property type="chains" value="E=1-215"/>
</dbReference>
<dbReference type="PDB" id="2NVT">
    <property type="method" value="X-ray"/>
    <property type="resolution" value="3.36 A"/>
    <property type="chains" value="E=1-215"/>
</dbReference>
<dbReference type="PDB" id="2NVX">
    <property type="method" value="X-ray"/>
    <property type="resolution" value="3.60 A"/>
    <property type="chains" value="E=1-215"/>
</dbReference>
<dbReference type="PDB" id="2NVY">
    <property type="method" value="X-ray"/>
    <property type="resolution" value="3.40 A"/>
    <property type="chains" value="E=1-215"/>
</dbReference>
<dbReference type="PDB" id="2NVZ">
    <property type="method" value="X-ray"/>
    <property type="resolution" value="4.30 A"/>
    <property type="chains" value="E=1-215"/>
</dbReference>
<dbReference type="PDB" id="2R7Z">
    <property type="method" value="X-ray"/>
    <property type="resolution" value="3.80 A"/>
    <property type="chains" value="E=1-215"/>
</dbReference>
<dbReference type="PDB" id="2R92">
    <property type="method" value="X-ray"/>
    <property type="resolution" value="3.80 A"/>
    <property type="chains" value="E=1-215"/>
</dbReference>
<dbReference type="PDB" id="2R93">
    <property type="method" value="X-ray"/>
    <property type="resolution" value="4.00 A"/>
    <property type="chains" value="E=1-215"/>
</dbReference>
<dbReference type="PDB" id="2VUM">
    <property type="method" value="X-ray"/>
    <property type="resolution" value="3.40 A"/>
    <property type="chains" value="E=1-215"/>
</dbReference>
<dbReference type="PDB" id="2YU9">
    <property type="method" value="X-ray"/>
    <property type="resolution" value="3.40 A"/>
    <property type="chains" value="E=1-215"/>
</dbReference>
<dbReference type="PDB" id="3CQZ">
    <property type="method" value="X-ray"/>
    <property type="resolution" value="2.80 A"/>
    <property type="chains" value="E=1-215"/>
</dbReference>
<dbReference type="PDB" id="3FKI">
    <property type="method" value="X-ray"/>
    <property type="resolution" value="3.88 A"/>
    <property type="chains" value="E=1-215"/>
</dbReference>
<dbReference type="PDB" id="3GTG">
    <property type="method" value="X-ray"/>
    <property type="resolution" value="3.78 A"/>
    <property type="chains" value="E=1-215"/>
</dbReference>
<dbReference type="PDB" id="3GTJ">
    <property type="method" value="X-ray"/>
    <property type="resolution" value="3.42 A"/>
    <property type="chains" value="E=1-215"/>
</dbReference>
<dbReference type="PDB" id="3GTK">
    <property type="method" value="X-ray"/>
    <property type="resolution" value="3.80 A"/>
    <property type="chains" value="E=1-215"/>
</dbReference>
<dbReference type="PDB" id="3GTL">
    <property type="method" value="X-ray"/>
    <property type="resolution" value="3.38 A"/>
    <property type="chains" value="E=1-215"/>
</dbReference>
<dbReference type="PDB" id="3GTM">
    <property type="method" value="X-ray"/>
    <property type="resolution" value="3.80 A"/>
    <property type="chains" value="E=1-215"/>
</dbReference>
<dbReference type="PDB" id="3GTO">
    <property type="method" value="X-ray"/>
    <property type="resolution" value="4.00 A"/>
    <property type="chains" value="E=1-215"/>
</dbReference>
<dbReference type="PDB" id="3GTP">
    <property type="method" value="X-ray"/>
    <property type="resolution" value="3.90 A"/>
    <property type="chains" value="E=1-215"/>
</dbReference>
<dbReference type="PDB" id="3GTQ">
    <property type="method" value="X-ray"/>
    <property type="resolution" value="3.80 A"/>
    <property type="chains" value="E=1-215"/>
</dbReference>
<dbReference type="PDB" id="3H3V">
    <property type="method" value="X-ray"/>
    <property type="resolution" value="4.00 A"/>
    <property type="chains" value="F=1-215"/>
</dbReference>
<dbReference type="PDB" id="3HOU">
    <property type="method" value="X-ray"/>
    <property type="resolution" value="3.20 A"/>
    <property type="chains" value="E/Q=1-215"/>
</dbReference>
<dbReference type="PDB" id="3HOV">
    <property type="method" value="X-ray"/>
    <property type="resolution" value="3.50 A"/>
    <property type="chains" value="E=1-215"/>
</dbReference>
<dbReference type="PDB" id="3HOW">
    <property type="method" value="X-ray"/>
    <property type="resolution" value="3.60 A"/>
    <property type="chains" value="E=1-215"/>
</dbReference>
<dbReference type="PDB" id="3HOX">
    <property type="method" value="X-ray"/>
    <property type="resolution" value="3.65 A"/>
    <property type="chains" value="E=1-215"/>
</dbReference>
<dbReference type="PDB" id="3HOY">
    <property type="method" value="X-ray"/>
    <property type="resolution" value="3.40 A"/>
    <property type="chains" value="E=1-215"/>
</dbReference>
<dbReference type="PDB" id="3HOZ">
    <property type="method" value="X-ray"/>
    <property type="resolution" value="3.65 A"/>
    <property type="chains" value="E=1-215"/>
</dbReference>
<dbReference type="PDB" id="3I4M">
    <property type="method" value="X-ray"/>
    <property type="resolution" value="3.70 A"/>
    <property type="chains" value="E=1-215"/>
</dbReference>
<dbReference type="PDB" id="3I4N">
    <property type="method" value="X-ray"/>
    <property type="resolution" value="3.90 A"/>
    <property type="chains" value="E=1-215"/>
</dbReference>
<dbReference type="PDB" id="3J0K">
    <property type="method" value="EM"/>
    <property type="resolution" value="36.00 A"/>
    <property type="chains" value="E=1-215"/>
</dbReference>
<dbReference type="PDB" id="3J1N">
    <property type="method" value="EM"/>
    <property type="resolution" value="16.00 A"/>
    <property type="chains" value="E=1-215"/>
</dbReference>
<dbReference type="PDB" id="3K1F">
    <property type="method" value="X-ray"/>
    <property type="resolution" value="4.30 A"/>
    <property type="chains" value="E=1-215"/>
</dbReference>
<dbReference type="PDB" id="3K7A">
    <property type="method" value="X-ray"/>
    <property type="resolution" value="3.80 A"/>
    <property type="chains" value="E=1-215"/>
</dbReference>
<dbReference type="PDB" id="3M3Y">
    <property type="method" value="X-ray"/>
    <property type="resolution" value="3.18 A"/>
    <property type="chains" value="E=1-215"/>
</dbReference>
<dbReference type="PDB" id="3M4O">
    <property type="method" value="X-ray"/>
    <property type="resolution" value="3.57 A"/>
    <property type="chains" value="E=1-215"/>
</dbReference>
<dbReference type="PDB" id="3PO2">
    <property type="method" value="X-ray"/>
    <property type="resolution" value="3.30 A"/>
    <property type="chains" value="E=1-215"/>
</dbReference>
<dbReference type="PDB" id="3PO3">
    <property type="method" value="X-ray"/>
    <property type="resolution" value="3.30 A"/>
    <property type="chains" value="E=1-215"/>
</dbReference>
<dbReference type="PDB" id="3QT1">
    <property type="method" value="X-ray"/>
    <property type="resolution" value="4.30 A"/>
    <property type="chains" value="E=1-215"/>
</dbReference>
<dbReference type="PDB" id="3RZD">
    <property type="method" value="X-ray"/>
    <property type="resolution" value="3.30 A"/>
    <property type="chains" value="E=1-215"/>
</dbReference>
<dbReference type="PDB" id="3RZO">
    <property type="method" value="X-ray"/>
    <property type="resolution" value="3.00 A"/>
    <property type="chains" value="E=1-215"/>
</dbReference>
<dbReference type="PDB" id="3S14">
    <property type="method" value="X-ray"/>
    <property type="resolution" value="2.85 A"/>
    <property type="chains" value="E=1-215"/>
</dbReference>
<dbReference type="PDB" id="3S15">
    <property type="method" value="X-ray"/>
    <property type="resolution" value="3.30 A"/>
    <property type="chains" value="E=1-215"/>
</dbReference>
<dbReference type="PDB" id="3S16">
    <property type="method" value="X-ray"/>
    <property type="resolution" value="3.24 A"/>
    <property type="chains" value="E=1-215"/>
</dbReference>
<dbReference type="PDB" id="3S17">
    <property type="method" value="X-ray"/>
    <property type="resolution" value="3.20 A"/>
    <property type="chains" value="E=1-215"/>
</dbReference>
<dbReference type="PDB" id="3S1M">
    <property type="method" value="X-ray"/>
    <property type="resolution" value="3.13 A"/>
    <property type="chains" value="E=1-215"/>
</dbReference>
<dbReference type="PDB" id="3S1N">
    <property type="method" value="X-ray"/>
    <property type="resolution" value="3.10 A"/>
    <property type="chains" value="E=1-215"/>
</dbReference>
<dbReference type="PDB" id="3S1Q">
    <property type="method" value="X-ray"/>
    <property type="resolution" value="3.30 A"/>
    <property type="chains" value="E=1-215"/>
</dbReference>
<dbReference type="PDB" id="3S1R">
    <property type="method" value="X-ray"/>
    <property type="resolution" value="3.20 A"/>
    <property type="chains" value="E=1-215"/>
</dbReference>
<dbReference type="PDB" id="3S2D">
    <property type="method" value="X-ray"/>
    <property type="resolution" value="3.20 A"/>
    <property type="chains" value="E=1-215"/>
</dbReference>
<dbReference type="PDB" id="3S2H">
    <property type="method" value="X-ray"/>
    <property type="resolution" value="3.30 A"/>
    <property type="chains" value="E=1-215"/>
</dbReference>
<dbReference type="PDB" id="4A3B">
    <property type="method" value="X-ray"/>
    <property type="resolution" value="3.50 A"/>
    <property type="chains" value="E=1-215"/>
</dbReference>
<dbReference type="PDB" id="4A3C">
    <property type="method" value="X-ray"/>
    <property type="resolution" value="3.50 A"/>
    <property type="chains" value="E=1-215"/>
</dbReference>
<dbReference type="PDB" id="4A3D">
    <property type="method" value="X-ray"/>
    <property type="resolution" value="3.40 A"/>
    <property type="chains" value="E=1-215"/>
</dbReference>
<dbReference type="PDB" id="4A3E">
    <property type="method" value="X-ray"/>
    <property type="resolution" value="3.40 A"/>
    <property type="chains" value="E=1-215"/>
</dbReference>
<dbReference type="PDB" id="4A3F">
    <property type="method" value="X-ray"/>
    <property type="resolution" value="3.50 A"/>
    <property type="chains" value="E=1-215"/>
</dbReference>
<dbReference type="PDB" id="4A3G">
    <property type="method" value="X-ray"/>
    <property type="resolution" value="3.50 A"/>
    <property type="chains" value="E=1-215"/>
</dbReference>
<dbReference type="PDB" id="4A3I">
    <property type="method" value="X-ray"/>
    <property type="resolution" value="3.80 A"/>
    <property type="chains" value="E=1-215"/>
</dbReference>
<dbReference type="PDB" id="4A3J">
    <property type="method" value="X-ray"/>
    <property type="resolution" value="3.70 A"/>
    <property type="chains" value="E=1-215"/>
</dbReference>
<dbReference type="PDB" id="4A3K">
    <property type="method" value="X-ray"/>
    <property type="resolution" value="3.50 A"/>
    <property type="chains" value="E=1-215"/>
</dbReference>
<dbReference type="PDB" id="4A3L">
    <property type="method" value="X-ray"/>
    <property type="resolution" value="3.50 A"/>
    <property type="chains" value="E=1-215"/>
</dbReference>
<dbReference type="PDB" id="4A3M">
    <property type="method" value="X-ray"/>
    <property type="resolution" value="3.90 A"/>
    <property type="chains" value="E=1-215"/>
</dbReference>
<dbReference type="PDB" id="4A93">
    <property type="method" value="X-ray"/>
    <property type="resolution" value="3.40 A"/>
    <property type="chains" value="E=1-215"/>
</dbReference>
<dbReference type="PDB" id="4BBR">
    <property type="method" value="X-ray"/>
    <property type="resolution" value="3.40 A"/>
    <property type="chains" value="E=1-215"/>
</dbReference>
<dbReference type="PDB" id="4BBS">
    <property type="method" value="X-ray"/>
    <property type="resolution" value="3.60 A"/>
    <property type="chains" value="E=1-215"/>
</dbReference>
<dbReference type="PDB" id="4BXX">
    <property type="method" value="X-ray"/>
    <property type="resolution" value="3.28 A"/>
    <property type="chains" value="E=1-215"/>
</dbReference>
<dbReference type="PDB" id="4BXZ">
    <property type="method" value="X-ray"/>
    <property type="resolution" value="4.80 A"/>
    <property type="chains" value="E=1-215"/>
</dbReference>
<dbReference type="PDB" id="4BY1">
    <property type="method" value="X-ray"/>
    <property type="resolution" value="3.60 A"/>
    <property type="chains" value="E=1-215"/>
</dbReference>
<dbReference type="PDB" id="4BY7">
    <property type="method" value="X-ray"/>
    <property type="resolution" value="3.15 A"/>
    <property type="chains" value="E=1-215"/>
</dbReference>
<dbReference type="PDB" id="4C2M">
    <property type="method" value="X-ray"/>
    <property type="resolution" value="2.80 A"/>
    <property type="chains" value="E/T=1-215"/>
</dbReference>
<dbReference type="PDB" id="4C3H">
    <property type="method" value="X-ray"/>
    <property type="resolution" value="3.27 A"/>
    <property type="chains" value="E=1-215"/>
</dbReference>
<dbReference type="PDB" id="4C3I">
    <property type="method" value="X-ray"/>
    <property type="resolution" value="3.00 A"/>
    <property type="chains" value="E=1-215"/>
</dbReference>
<dbReference type="PDB" id="4C3J">
    <property type="method" value="X-ray"/>
    <property type="resolution" value="3.35 A"/>
    <property type="chains" value="E=1-215"/>
</dbReference>
<dbReference type="PDB" id="4V1M">
    <property type="method" value="EM"/>
    <property type="resolution" value="6.60 A"/>
    <property type="chains" value="E=1-215"/>
</dbReference>
<dbReference type="PDB" id="4V1N">
    <property type="method" value="EM"/>
    <property type="resolution" value="7.80 A"/>
    <property type="chains" value="E=1-215"/>
</dbReference>
<dbReference type="PDB" id="4V1O">
    <property type="method" value="EM"/>
    <property type="resolution" value="9.70 A"/>
    <property type="chains" value="E=1-215"/>
</dbReference>
<dbReference type="PDB" id="4X67">
    <property type="method" value="X-ray"/>
    <property type="resolution" value="4.10 A"/>
    <property type="chains" value="E=1-215"/>
</dbReference>
<dbReference type="PDB" id="4X6A">
    <property type="method" value="X-ray"/>
    <property type="resolution" value="3.96 A"/>
    <property type="chains" value="E=1-215"/>
</dbReference>
<dbReference type="PDB" id="4Y52">
    <property type="method" value="X-ray"/>
    <property type="resolution" value="3.50 A"/>
    <property type="chains" value="E=1-215"/>
</dbReference>
<dbReference type="PDB" id="4Y7N">
    <property type="method" value="X-ray"/>
    <property type="resolution" value="3.30 A"/>
    <property type="chains" value="E=1-215"/>
</dbReference>
<dbReference type="PDB" id="4YM7">
    <property type="method" value="X-ray"/>
    <property type="resolution" value="5.50 A"/>
    <property type="chains" value="AE/BE/CE/DE/EE/FE=1-215"/>
</dbReference>
<dbReference type="PDB" id="5C3E">
    <property type="method" value="X-ray"/>
    <property type="resolution" value="3.70 A"/>
    <property type="chains" value="E=1-215"/>
</dbReference>
<dbReference type="PDB" id="5C44">
    <property type="method" value="X-ray"/>
    <property type="resolution" value="3.95 A"/>
    <property type="chains" value="E=1-215"/>
</dbReference>
<dbReference type="PDB" id="5C4A">
    <property type="method" value="X-ray"/>
    <property type="resolution" value="4.20 A"/>
    <property type="chains" value="E=1-215"/>
</dbReference>
<dbReference type="PDB" id="5C4J">
    <property type="method" value="X-ray"/>
    <property type="resolution" value="4.00 A"/>
    <property type="chains" value="E=1-215"/>
</dbReference>
<dbReference type="PDB" id="5C4X">
    <property type="method" value="X-ray"/>
    <property type="resolution" value="4.00 A"/>
    <property type="chains" value="E=1-215"/>
</dbReference>
<dbReference type="PDB" id="5FJ8">
    <property type="method" value="EM"/>
    <property type="resolution" value="3.90 A"/>
    <property type="chains" value="E=1-215"/>
</dbReference>
<dbReference type="PDB" id="5FJ9">
    <property type="method" value="EM"/>
    <property type="resolution" value="4.60 A"/>
    <property type="chains" value="E=1-215"/>
</dbReference>
<dbReference type="PDB" id="5FJA">
    <property type="method" value="EM"/>
    <property type="resolution" value="4.65 A"/>
    <property type="chains" value="E=1-215"/>
</dbReference>
<dbReference type="PDB" id="5FMF">
    <property type="method" value="EM"/>
    <property type="resolution" value="6.00 A"/>
    <property type="chains" value="E=2-215"/>
</dbReference>
<dbReference type="PDB" id="5FYW">
    <property type="method" value="EM"/>
    <property type="resolution" value="4.35 A"/>
    <property type="chains" value="E=1-215"/>
</dbReference>
<dbReference type="PDB" id="5FZ5">
    <property type="method" value="EM"/>
    <property type="resolution" value="8.80 A"/>
    <property type="chains" value="E=1-215"/>
</dbReference>
<dbReference type="PDB" id="5G5L">
    <property type="method" value="EM"/>
    <property type="resolution" value="4.80 A"/>
    <property type="chains" value="E=1-215"/>
</dbReference>
<dbReference type="PDB" id="5IP7">
    <property type="method" value="X-ray"/>
    <property type="resolution" value="3.52 A"/>
    <property type="chains" value="E=2-215"/>
</dbReference>
<dbReference type="PDB" id="5IP9">
    <property type="method" value="X-ray"/>
    <property type="resolution" value="3.90 A"/>
    <property type="chains" value="E=2-215"/>
</dbReference>
<dbReference type="PDB" id="5LMX">
    <property type="method" value="EM"/>
    <property type="resolution" value="4.90 A"/>
    <property type="chains" value="E=1-215"/>
</dbReference>
<dbReference type="PDB" id="5M3F">
    <property type="method" value="EM"/>
    <property type="resolution" value="3.80 A"/>
    <property type="chains" value="E=1-215"/>
</dbReference>
<dbReference type="PDB" id="5M3M">
    <property type="method" value="EM"/>
    <property type="resolution" value="4.00 A"/>
    <property type="chains" value="E=1-215"/>
</dbReference>
<dbReference type="PDB" id="5M5W">
    <property type="method" value="EM"/>
    <property type="resolution" value="3.80 A"/>
    <property type="chains" value="E=1-215"/>
</dbReference>
<dbReference type="PDB" id="5M5X">
    <property type="method" value="EM"/>
    <property type="resolution" value="4.00 A"/>
    <property type="chains" value="E=1-215"/>
</dbReference>
<dbReference type="PDB" id="5M5Y">
    <property type="method" value="EM"/>
    <property type="resolution" value="4.00 A"/>
    <property type="chains" value="E=1-215"/>
</dbReference>
<dbReference type="PDB" id="5M64">
    <property type="method" value="EM"/>
    <property type="resolution" value="4.60 A"/>
    <property type="chains" value="E=1-215"/>
</dbReference>
<dbReference type="PDB" id="5N5Y">
    <property type="method" value="EM"/>
    <property type="resolution" value="7.70 A"/>
    <property type="chains" value="E=1-215"/>
</dbReference>
<dbReference type="PDB" id="5N5Z">
    <property type="method" value="EM"/>
    <property type="resolution" value="7.70 A"/>
    <property type="chains" value="E=1-215"/>
</dbReference>
<dbReference type="PDB" id="5N60">
    <property type="method" value="EM"/>
    <property type="resolution" value="7.70 A"/>
    <property type="chains" value="E=1-215"/>
</dbReference>
<dbReference type="PDB" id="5N61">
    <property type="method" value="EM"/>
    <property type="resolution" value="3.40 A"/>
    <property type="chains" value="E=1-215"/>
</dbReference>
<dbReference type="PDB" id="5OA1">
    <property type="method" value="EM"/>
    <property type="resolution" value="4.40 A"/>
    <property type="chains" value="E=1-215"/>
</dbReference>
<dbReference type="PDB" id="5OQJ">
    <property type="method" value="EM"/>
    <property type="resolution" value="4.70 A"/>
    <property type="chains" value="E=1-215"/>
</dbReference>
<dbReference type="PDB" id="5OQM">
    <property type="method" value="EM"/>
    <property type="resolution" value="5.80 A"/>
    <property type="chains" value="E=1-215"/>
</dbReference>
<dbReference type="PDB" id="5OT2">
    <property type="method" value="X-ray"/>
    <property type="resolution" value="3.20 A"/>
    <property type="chains" value="E=1-215"/>
</dbReference>
<dbReference type="PDB" id="5SVA">
    <property type="method" value="EM"/>
    <property type="resolution" value="15.30 A"/>
    <property type="chains" value="E=1-215"/>
</dbReference>
<dbReference type="PDB" id="5U5Q">
    <property type="method" value="X-ray"/>
    <property type="resolution" value="3.80 A"/>
    <property type="chains" value="E=1-215"/>
</dbReference>
<dbReference type="PDB" id="5VVR">
    <property type="method" value="EM"/>
    <property type="resolution" value="5.80 A"/>
    <property type="chains" value="E=1-215"/>
</dbReference>
<dbReference type="PDB" id="5VVS">
    <property type="method" value="EM"/>
    <property type="resolution" value="6.40 A"/>
    <property type="chains" value="E=1-215"/>
</dbReference>
<dbReference type="PDB" id="5W4U">
    <property type="method" value="X-ray"/>
    <property type="resolution" value="3.60 A"/>
    <property type="chains" value="E=1-215"/>
</dbReference>
<dbReference type="PDB" id="5W51">
    <property type="method" value="X-ray"/>
    <property type="resolution" value="3.40 A"/>
    <property type="chains" value="E=1-215"/>
</dbReference>
<dbReference type="PDB" id="5W5Y">
    <property type="method" value="EM"/>
    <property type="resolution" value="3.80 A"/>
    <property type="chains" value="E=1-215"/>
</dbReference>
<dbReference type="PDB" id="5W64">
    <property type="method" value="EM"/>
    <property type="resolution" value="4.20 A"/>
    <property type="chains" value="E=1-215"/>
</dbReference>
<dbReference type="PDB" id="5W65">
    <property type="method" value="EM"/>
    <property type="resolution" value="4.30 A"/>
    <property type="chains" value="E=1-215"/>
</dbReference>
<dbReference type="PDB" id="5W66">
    <property type="method" value="EM"/>
    <property type="resolution" value="3.90 A"/>
    <property type="chains" value="E=1-215"/>
</dbReference>
<dbReference type="PDB" id="6BLO">
    <property type="method" value="X-ray"/>
    <property type="resolution" value="3.40 A"/>
    <property type="chains" value="E=1-215"/>
</dbReference>
<dbReference type="PDB" id="6BLP">
    <property type="method" value="X-ray"/>
    <property type="resolution" value="3.20 A"/>
    <property type="chains" value="E=1-215"/>
</dbReference>
<dbReference type="PDB" id="6BM2">
    <property type="method" value="X-ray"/>
    <property type="resolution" value="3.40 A"/>
    <property type="chains" value="E=1-215"/>
</dbReference>
<dbReference type="PDB" id="6BM4">
    <property type="method" value="X-ray"/>
    <property type="resolution" value="2.95 A"/>
    <property type="chains" value="E=1-215"/>
</dbReference>
<dbReference type="PDB" id="6BQF">
    <property type="method" value="X-ray"/>
    <property type="resolution" value="3.35 A"/>
    <property type="chains" value="E=1-215"/>
</dbReference>
<dbReference type="PDB" id="6CNB">
    <property type="method" value="EM"/>
    <property type="resolution" value="4.10 A"/>
    <property type="chains" value="E=1-215"/>
</dbReference>
<dbReference type="PDB" id="6CNC">
    <property type="method" value="EM"/>
    <property type="resolution" value="4.10 A"/>
    <property type="chains" value="E=1-215"/>
</dbReference>
<dbReference type="PDB" id="6CND">
    <property type="method" value="EM"/>
    <property type="resolution" value="4.80 A"/>
    <property type="chains" value="E=1-215"/>
</dbReference>
<dbReference type="PDB" id="6CNF">
    <property type="method" value="EM"/>
    <property type="resolution" value="4.50 A"/>
    <property type="chains" value="E=1-215"/>
</dbReference>
<dbReference type="PDB" id="6EU0">
    <property type="method" value="EM"/>
    <property type="resolution" value="4.00 A"/>
    <property type="chains" value="E=1-215"/>
</dbReference>
<dbReference type="PDB" id="6EU1">
    <property type="method" value="EM"/>
    <property type="resolution" value="3.40 A"/>
    <property type="chains" value="E=1-215"/>
</dbReference>
<dbReference type="PDB" id="6EU2">
    <property type="method" value="EM"/>
    <property type="resolution" value="3.40 A"/>
    <property type="chains" value="E=1-215"/>
</dbReference>
<dbReference type="PDB" id="6EU3">
    <property type="method" value="EM"/>
    <property type="resolution" value="3.30 A"/>
    <property type="chains" value="E=1-215"/>
</dbReference>
<dbReference type="PDB" id="6F40">
    <property type="method" value="EM"/>
    <property type="resolution" value="3.70 A"/>
    <property type="chains" value="E=1-215"/>
</dbReference>
<dbReference type="PDB" id="6F41">
    <property type="method" value="EM"/>
    <property type="resolution" value="4.30 A"/>
    <property type="chains" value="E=1-215"/>
</dbReference>
<dbReference type="PDB" id="6F42">
    <property type="method" value="EM"/>
    <property type="resolution" value="5.50 A"/>
    <property type="chains" value="E=1-215"/>
</dbReference>
<dbReference type="PDB" id="6F44">
    <property type="method" value="EM"/>
    <property type="resolution" value="4.20 A"/>
    <property type="chains" value="E=1-215"/>
</dbReference>
<dbReference type="PDB" id="6GYK">
    <property type="method" value="EM"/>
    <property type="resolution" value="5.10 A"/>
    <property type="chains" value="E=1-215"/>
</dbReference>
<dbReference type="PDB" id="6GYL">
    <property type="method" value="EM"/>
    <property type="resolution" value="4.80 A"/>
    <property type="chains" value="E=1-215"/>
</dbReference>
<dbReference type="PDB" id="6GYM">
    <property type="method" value="EM"/>
    <property type="resolution" value="6.70 A"/>
    <property type="chains" value="E=1-215"/>
</dbReference>
<dbReference type="PDB" id="6H67">
    <property type="method" value="EM"/>
    <property type="resolution" value="3.60 A"/>
    <property type="chains" value="E=1-215"/>
</dbReference>
<dbReference type="PDB" id="6H68">
    <property type="method" value="EM"/>
    <property type="resolution" value="4.60 A"/>
    <property type="chains" value="E=1-215"/>
</dbReference>
<dbReference type="PDB" id="6HKO">
    <property type="method" value="EM"/>
    <property type="resolution" value="3.42 A"/>
    <property type="chains" value="E=1-215"/>
</dbReference>
<dbReference type="PDB" id="6HLQ">
    <property type="method" value="EM"/>
    <property type="resolution" value="3.18 A"/>
    <property type="chains" value="E=1-215"/>
</dbReference>
<dbReference type="PDB" id="6HLR">
    <property type="method" value="EM"/>
    <property type="resolution" value="3.18 A"/>
    <property type="chains" value="E=1-215"/>
</dbReference>
<dbReference type="PDB" id="6HLS">
    <property type="method" value="EM"/>
    <property type="resolution" value="3.21 A"/>
    <property type="chains" value="E=1-215"/>
</dbReference>
<dbReference type="PDB" id="6I84">
    <property type="method" value="EM"/>
    <property type="resolution" value="4.40 A"/>
    <property type="chains" value="E=1-215"/>
</dbReference>
<dbReference type="PDB" id="6O6C">
    <property type="method" value="EM"/>
    <property type="resolution" value="3.10 A"/>
    <property type="chains" value="D=1-215"/>
</dbReference>
<dbReference type="PDB" id="6RQH">
    <property type="method" value="EM"/>
    <property type="resolution" value="3.70 A"/>
    <property type="chains" value="E=1-215"/>
</dbReference>
<dbReference type="PDB" id="6RQL">
    <property type="method" value="EM"/>
    <property type="resolution" value="2.90 A"/>
    <property type="chains" value="E=1-215"/>
</dbReference>
<dbReference type="PDB" id="6RQT">
    <property type="method" value="EM"/>
    <property type="resolution" value="4.00 A"/>
    <property type="chains" value="E=1-215"/>
</dbReference>
<dbReference type="PDB" id="6RRD">
    <property type="method" value="EM"/>
    <property type="resolution" value="3.10 A"/>
    <property type="chains" value="E=1-215"/>
</dbReference>
<dbReference type="PDB" id="6RUI">
    <property type="method" value="EM"/>
    <property type="resolution" value="2.70 A"/>
    <property type="chains" value="E=1-215"/>
</dbReference>
<dbReference type="PDB" id="6RUO">
    <property type="method" value="EM"/>
    <property type="resolution" value="3.50 A"/>
    <property type="chains" value="E=1-215"/>
</dbReference>
<dbReference type="PDB" id="6RWE">
    <property type="method" value="EM"/>
    <property type="resolution" value="3.00 A"/>
    <property type="chains" value="E=1-215"/>
</dbReference>
<dbReference type="PDB" id="6TPS">
    <property type="method" value="EM"/>
    <property type="resolution" value="3.54 A"/>
    <property type="chains" value="E=1-215"/>
</dbReference>
<dbReference type="PDB" id="6TUT">
    <property type="method" value="EM"/>
    <property type="resolution" value="3.25 A"/>
    <property type="chains" value="E=1-215"/>
</dbReference>
<dbReference type="PDB" id="6UPX">
    <property type="method" value="X-ray"/>
    <property type="resolution" value="3.40 A"/>
    <property type="chains" value="E=1-215"/>
</dbReference>
<dbReference type="PDB" id="6UPY">
    <property type="method" value="X-ray"/>
    <property type="resolution" value="3.40 A"/>
    <property type="chains" value="E=1-215"/>
</dbReference>
<dbReference type="PDB" id="6UPZ">
    <property type="method" value="X-ray"/>
    <property type="resolution" value="3.10 A"/>
    <property type="chains" value="E=1-215"/>
</dbReference>
<dbReference type="PDB" id="6UQ0">
    <property type="method" value="X-ray"/>
    <property type="resolution" value="3.56 A"/>
    <property type="chains" value="E=1-215"/>
</dbReference>
<dbReference type="PDB" id="6UQ1">
    <property type="method" value="X-ray"/>
    <property type="resolution" value="3.60 A"/>
    <property type="chains" value="E=1-215"/>
</dbReference>
<dbReference type="PDB" id="6UQ2">
    <property type="method" value="X-ray"/>
    <property type="resolution" value="3.20 A"/>
    <property type="chains" value="E=1-215"/>
</dbReference>
<dbReference type="PDB" id="6UQ3">
    <property type="method" value="X-ray"/>
    <property type="resolution" value="3.47 A"/>
    <property type="chains" value="E=1-215"/>
</dbReference>
<dbReference type="PDB" id="7KED">
    <property type="method" value="X-ray"/>
    <property type="resolution" value="3.60 A"/>
    <property type="chains" value="E=1-215"/>
</dbReference>
<dbReference type="PDB" id="7KEE">
    <property type="method" value="X-ray"/>
    <property type="resolution" value="3.45 A"/>
    <property type="chains" value="E=1-215"/>
</dbReference>
<dbReference type="PDB" id="7KEF">
    <property type="method" value="X-ray"/>
    <property type="resolution" value="3.89 A"/>
    <property type="chains" value="E=1-215"/>
</dbReference>
<dbReference type="PDB" id="7MEI">
    <property type="method" value="EM"/>
    <property type="resolution" value="3.54 A"/>
    <property type="chains" value="E/e=1-215"/>
</dbReference>
<dbReference type="PDB" id="7MK9">
    <property type="method" value="EM"/>
    <property type="resolution" value="3.54 A"/>
    <property type="chains" value="E=1-215"/>
</dbReference>
<dbReference type="PDB" id="7MKA">
    <property type="method" value="EM"/>
    <property type="resolution" value="3.54 A"/>
    <property type="chains" value="e=1-215"/>
</dbReference>
<dbReference type="PDB" id="7ML0">
    <property type="method" value="EM"/>
    <property type="resolution" value="3.00 A"/>
    <property type="chains" value="E=1-215"/>
</dbReference>
<dbReference type="PDB" id="7ML1">
    <property type="method" value="EM"/>
    <property type="resolution" value="4.00 A"/>
    <property type="chains" value="E=1-215"/>
</dbReference>
<dbReference type="PDB" id="7ML2">
    <property type="method" value="EM"/>
    <property type="resolution" value="3.40 A"/>
    <property type="chains" value="E=1-215"/>
</dbReference>
<dbReference type="PDB" id="7ML4">
    <property type="method" value="EM"/>
    <property type="resolution" value="3.10 A"/>
    <property type="chains" value="E=1-215"/>
</dbReference>
<dbReference type="PDB" id="7NKX">
    <property type="method" value="EM"/>
    <property type="resolution" value="2.90 A"/>
    <property type="chains" value="E=1-215"/>
</dbReference>
<dbReference type="PDB" id="7NKY">
    <property type="method" value="EM"/>
    <property type="resolution" value="3.20 A"/>
    <property type="chains" value="E=1-215"/>
</dbReference>
<dbReference type="PDB" id="7O4I">
    <property type="method" value="EM"/>
    <property type="resolution" value="3.20 A"/>
    <property type="chains" value="E=1-215"/>
</dbReference>
<dbReference type="PDB" id="7O4J">
    <property type="method" value="EM"/>
    <property type="resolution" value="2.90 A"/>
    <property type="chains" value="E=1-215"/>
</dbReference>
<dbReference type="PDB" id="7O72">
    <property type="method" value="EM"/>
    <property type="resolution" value="3.40 A"/>
    <property type="chains" value="E=1-215"/>
</dbReference>
<dbReference type="PDB" id="7O73">
    <property type="method" value="EM"/>
    <property type="resolution" value="3.40 A"/>
    <property type="chains" value="E=1-215"/>
</dbReference>
<dbReference type="PDB" id="7O75">
    <property type="method" value="EM"/>
    <property type="resolution" value="3.20 A"/>
    <property type="chains" value="E=1-215"/>
</dbReference>
<dbReference type="PDB" id="7RIM">
    <property type="method" value="X-ray"/>
    <property type="resolution" value="2.90 A"/>
    <property type="chains" value="E=1-215"/>
</dbReference>
<dbReference type="PDB" id="7RIP">
    <property type="method" value="X-ray"/>
    <property type="resolution" value="3.30 A"/>
    <property type="chains" value="E=1-215"/>
</dbReference>
<dbReference type="PDB" id="7RIQ">
    <property type="method" value="X-ray"/>
    <property type="resolution" value="3.00 A"/>
    <property type="chains" value="E=1-215"/>
</dbReference>
<dbReference type="PDB" id="7RIW">
    <property type="method" value="X-ray"/>
    <property type="resolution" value="3.20 A"/>
    <property type="chains" value="E=1-215"/>
</dbReference>
<dbReference type="PDB" id="7RIX">
    <property type="method" value="X-ray"/>
    <property type="resolution" value="3.40 A"/>
    <property type="chains" value="E=1-215"/>
</dbReference>
<dbReference type="PDB" id="7RIY">
    <property type="method" value="X-ray"/>
    <property type="resolution" value="3.70 A"/>
    <property type="chains" value="E=1-215"/>
</dbReference>
<dbReference type="PDB" id="7UI9">
    <property type="method" value="EM"/>
    <property type="resolution" value="3.30 A"/>
    <property type="chains" value="E=1-215"/>
</dbReference>
<dbReference type="PDB" id="7UIF">
    <property type="method" value="EM"/>
    <property type="resolution" value="4.60 A"/>
    <property type="chains" value="E=1-215"/>
</dbReference>
<dbReference type="PDB" id="7UIO">
    <property type="method" value="EM"/>
    <property type="resolution" value="3.30 A"/>
    <property type="chains" value="AE/BE=1-215"/>
</dbReference>
<dbReference type="PDB" id="7Z0H">
    <property type="method" value="EM"/>
    <property type="resolution" value="2.60 A"/>
    <property type="chains" value="E=1-215"/>
</dbReference>
<dbReference type="PDB" id="7Z1L">
    <property type="method" value="EM"/>
    <property type="resolution" value="2.80 A"/>
    <property type="chains" value="E=1-215"/>
</dbReference>
<dbReference type="PDB" id="7Z1M">
    <property type="method" value="EM"/>
    <property type="resolution" value="3.40 A"/>
    <property type="chains" value="E=1-215"/>
</dbReference>
<dbReference type="PDB" id="7Z1N">
    <property type="method" value="EM"/>
    <property type="resolution" value="3.90 A"/>
    <property type="chains" value="E=1-215"/>
</dbReference>
<dbReference type="PDB" id="7Z1O">
    <property type="method" value="EM"/>
    <property type="resolution" value="2.70 A"/>
    <property type="chains" value="E=1-215"/>
</dbReference>
<dbReference type="PDB" id="7Z2Z">
    <property type="method" value="EM"/>
    <property type="resolution" value="3.07 A"/>
    <property type="chains" value="E=1-215"/>
</dbReference>
<dbReference type="PDB" id="7Z30">
    <property type="method" value="EM"/>
    <property type="resolution" value="2.90 A"/>
    <property type="chains" value="E=1-215"/>
</dbReference>
<dbReference type="PDB" id="7Z31">
    <property type="method" value="EM"/>
    <property type="resolution" value="2.76 A"/>
    <property type="chains" value="E=1-215"/>
</dbReference>
<dbReference type="PDB" id="7ZS9">
    <property type="method" value="EM"/>
    <property type="resolution" value="3.10 A"/>
    <property type="chains" value="E=1-215"/>
</dbReference>
<dbReference type="PDB" id="7ZSA">
    <property type="method" value="EM"/>
    <property type="resolution" value="4.00 A"/>
    <property type="chains" value="E=1-215"/>
</dbReference>
<dbReference type="PDB" id="7ZSB">
    <property type="method" value="EM"/>
    <property type="resolution" value="6.60 A"/>
    <property type="chains" value="E=1-215"/>
</dbReference>
<dbReference type="PDB" id="8BWS">
    <property type="method" value="EM"/>
    <property type="resolution" value="3.20 A"/>
    <property type="chains" value="E=1-215"/>
</dbReference>
<dbReference type="PDB" id="8CEN">
    <property type="method" value="EM"/>
    <property type="resolution" value="3.00 A"/>
    <property type="chains" value="E=1-215"/>
</dbReference>
<dbReference type="PDB" id="8CEO">
    <property type="method" value="EM"/>
    <property type="resolution" value="3.60 A"/>
    <property type="chains" value="E=1-215"/>
</dbReference>
<dbReference type="PDB" id="8JCH">
    <property type="method" value="EM"/>
    <property type="resolution" value="2.70 A"/>
    <property type="chains" value="E=1-215"/>
</dbReference>
<dbReference type="PDB" id="8K5P">
    <property type="method" value="EM"/>
    <property type="resolution" value="2.80 A"/>
    <property type="chains" value="E=1-215"/>
</dbReference>
<dbReference type="PDB" id="8RAM">
    <property type="method" value="EM"/>
    <property type="resolution" value="2.80 A"/>
    <property type="chains" value="E=1-215"/>
</dbReference>
<dbReference type="PDB" id="8RAP">
    <property type="method" value="EM"/>
    <property type="resolution" value="4.30 A"/>
    <property type="chains" value="E=1-215"/>
</dbReference>
<dbReference type="PDB" id="8TUG">
    <property type="method" value="EM"/>
    <property type="resolution" value="3.50 A"/>
    <property type="chains" value="E=1-215"/>
</dbReference>
<dbReference type="PDB" id="8TVP">
    <property type="method" value="EM"/>
    <property type="resolution" value="3.70 A"/>
    <property type="chains" value="E=1-215"/>
</dbReference>
<dbReference type="PDB" id="8TVQ">
    <property type="method" value="EM"/>
    <property type="resolution" value="4.60 A"/>
    <property type="chains" value="E=1-215"/>
</dbReference>
<dbReference type="PDB" id="8TVS">
    <property type="method" value="EM"/>
    <property type="resolution" value="4.40 A"/>
    <property type="chains" value="E=1-215"/>
</dbReference>
<dbReference type="PDB" id="8TVV">
    <property type="method" value="EM"/>
    <property type="resolution" value="3.70 A"/>
    <property type="chains" value="E=1-215"/>
</dbReference>
<dbReference type="PDB" id="8TVW">
    <property type="method" value="EM"/>
    <property type="resolution" value="3.60 A"/>
    <property type="chains" value="E=1-215"/>
</dbReference>
<dbReference type="PDB" id="8TVX">
    <property type="method" value="EM"/>
    <property type="resolution" value="3.70 A"/>
    <property type="chains" value="E=1-215"/>
</dbReference>
<dbReference type="PDB" id="8TVY">
    <property type="method" value="EM"/>
    <property type="resolution" value="3.10 A"/>
    <property type="chains" value="E=1-215"/>
</dbReference>
<dbReference type="PDB" id="8UKQ">
    <property type="method" value="X-ray"/>
    <property type="resolution" value="3.50 A"/>
    <property type="chains" value="E=1-215"/>
</dbReference>
<dbReference type="PDB" id="8UKR">
    <property type="method" value="X-ray"/>
    <property type="resolution" value="3.78 A"/>
    <property type="chains" value="E=1-215"/>
</dbReference>
<dbReference type="PDB" id="8UKS">
    <property type="method" value="X-ray"/>
    <property type="resolution" value="3.40 A"/>
    <property type="chains" value="E=1-215"/>
</dbReference>
<dbReference type="PDB" id="8UKT">
    <property type="method" value="X-ray"/>
    <property type="resolution" value="3.60 A"/>
    <property type="chains" value="E=1-215"/>
</dbReference>
<dbReference type="PDB" id="8UKU">
    <property type="method" value="X-ray"/>
    <property type="resolution" value="3.60 A"/>
    <property type="chains" value="E=1-215"/>
</dbReference>
<dbReference type="PDB" id="8UMH">
    <property type="method" value="EM"/>
    <property type="resolution" value="4.10 A"/>
    <property type="chains" value="E=1-215"/>
</dbReference>
<dbReference type="PDB" id="8UMI">
    <property type="method" value="EM"/>
    <property type="resolution" value="3.70 A"/>
    <property type="chains" value="E=1-215"/>
</dbReference>
<dbReference type="PDB" id="8UOQ">
    <property type="method" value="EM"/>
    <property type="resolution" value="3.80 A"/>
    <property type="chains" value="E=1-215"/>
</dbReference>
<dbReference type="PDB" id="8UOT">
    <property type="method" value="EM"/>
    <property type="resolution" value="3.70 A"/>
    <property type="chains" value="E=1-215"/>
</dbReference>
<dbReference type="PDB" id="9BVT">
    <property type="method" value="X-ray"/>
    <property type="resolution" value="3.40 A"/>
    <property type="chains" value="E=1-215"/>
</dbReference>
<dbReference type="PDB" id="9BW0">
    <property type="method" value="X-ray"/>
    <property type="resolution" value="3.51 A"/>
    <property type="chains" value="E=1-215"/>
</dbReference>
<dbReference type="PDB" id="9JA1">
    <property type="method" value="EM"/>
    <property type="resolution" value="2.98 A"/>
    <property type="chains" value="E=1-215"/>
</dbReference>
<dbReference type="PDBsum" id="1DZF"/>
<dbReference type="PDBsum" id="1I3Q"/>
<dbReference type="PDBsum" id="1I50"/>
<dbReference type="PDBsum" id="1I6H"/>
<dbReference type="PDBsum" id="1K83"/>
<dbReference type="PDBsum" id="1NIK"/>
<dbReference type="PDBsum" id="1NT9"/>
<dbReference type="PDBsum" id="1PQV"/>
<dbReference type="PDBsum" id="1R5U"/>
<dbReference type="PDBsum" id="1R9S"/>
<dbReference type="PDBsum" id="1R9T"/>
<dbReference type="PDBsum" id="1SFO"/>
<dbReference type="PDBsum" id="1TWA"/>
<dbReference type="PDBsum" id="1TWC"/>
<dbReference type="PDBsum" id="1TWF"/>
<dbReference type="PDBsum" id="1TWG"/>
<dbReference type="PDBsum" id="1TWH"/>
<dbReference type="PDBsum" id="1WCM"/>
<dbReference type="PDBsum" id="1Y1V"/>
<dbReference type="PDBsum" id="1Y1W"/>
<dbReference type="PDBsum" id="1Y1Y"/>
<dbReference type="PDBsum" id="1Y77"/>
<dbReference type="PDBsum" id="2B63"/>
<dbReference type="PDBsum" id="2B8K"/>
<dbReference type="PDBsum" id="2E2H"/>
<dbReference type="PDBsum" id="2E2I"/>
<dbReference type="PDBsum" id="2E2J"/>
<dbReference type="PDBsum" id="2JA5"/>
<dbReference type="PDBsum" id="2JA6"/>
<dbReference type="PDBsum" id="2JA7"/>
<dbReference type="PDBsum" id="2JA8"/>
<dbReference type="PDBsum" id="2NVQ"/>
<dbReference type="PDBsum" id="2NVT"/>
<dbReference type="PDBsum" id="2NVX"/>
<dbReference type="PDBsum" id="2NVY"/>
<dbReference type="PDBsum" id="2NVZ"/>
<dbReference type="PDBsum" id="2R7Z"/>
<dbReference type="PDBsum" id="2R92"/>
<dbReference type="PDBsum" id="2R93"/>
<dbReference type="PDBsum" id="2VUM"/>
<dbReference type="PDBsum" id="2YU9"/>
<dbReference type="PDBsum" id="3CQZ"/>
<dbReference type="PDBsum" id="3FKI"/>
<dbReference type="PDBsum" id="3GTG"/>
<dbReference type="PDBsum" id="3GTJ"/>
<dbReference type="PDBsum" id="3GTK"/>
<dbReference type="PDBsum" id="3GTL"/>
<dbReference type="PDBsum" id="3GTM"/>
<dbReference type="PDBsum" id="3GTO"/>
<dbReference type="PDBsum" id="3GTP"/>
<dbReference type="PDBsum" id="3GTQ"/>
<dbReference type="PDBsum" id="3H3V"/>
<dbReference type="PDBsum" id="3HOU"/>
<dbReference type="PDBsum" id="3HOV"/>
<dbReference type="PDBsum" id="3HOW"/>
<dbReference type="PDBsum" id="3HOX"/>
<dbReference type="PDBsum" id="3HOY"/>
<dbReference type="PDBsum" id="3HOZ"/>
<dbReference type="PDBsum" id="3I4M"/>
<dbReference type="PDBsum" id="3I4N"/>
<dbReference type="PDBsum" id="3J0K"/>
<dbReference type="PDBsum" id="3J1N"/>
<dbReference type="PDBsum" id="3K1F"/>
<dbReference type="PDBsum" id="3K7A"/>
<dbReference type="PDBsum" id="3M3Y"/>
<dbReference type="PDBsum" id="3M4O"/>
<dbReference type="PDBsum" id="3PO2"/>
<dbReference type="PDBsum" id="3PO3"/>
<dbReference type="PDBsum" id="3QT1"/>
<dbReference type="PDBsum" id="3RZD"/>
<dbReference type="PDBsum" id="3RZO"/>
<dbReference type="PDBsum" id="3S14"/>
<dbReference type="PDBsum" id="3S15"/>
<dbReference type="PDBsum" id="3S16"/>
<dbReference type="PDBsum" id="3S17"/>
<dbReference type="PDBsum" id="3S1M"/>
<dbReference type="PDBsum" id="3S1N"/>
<dbReference type="PDBsum" id="3S1Q"/>
<dbReference type="PDBsum" id="3S1R"/>
<dbReference type="PDBsum" id="3S2D"/>
<dbReference type="PDBsum" id="3S2H"/>
<dbReference type="PDBsum" id="4A3B"/>
<dbReference type="PDBsum" id="4A3C"/>
<dbReference type="PDBsum" id="4A3D"/>
<dbReference type="PDBsum" id="4A3E"/>
<dbReference type="PDBsum" id="4A3F"/>
<dbReference type="PDBsum" id="4A3G"/>
<dbReference type="PDBsum" id="4A3I"/>
<dbReference type="PDBsum" id="4A3J"/>
<dbReference type="PDBsum" id="4A3K"/>
<dbReference type="PDBsum" id="4A3L"/>
<dbReference type="PDBsum" id="4A3M"/>
<dbReference type="PDBsum" id="4A93"/>
<dbReference type="PDBsum" id="4BBR"/>
<dbReference type="PDBsum" id="4BBS"/>
<dbReference type="PDBsum" id="4BXX"/>
<dbReference type="PDBsum" id="4BXZ"/>
<dbReference type="PDBsum" id="4BY1"/>
<dbReference type="PDBsum" id="4BY7"/>
<dbReference type="PDBsum" id="4C2M"/>
<dbReference type="PDBsum" id="4C3H"/>
<dbReference type="PDBsum" id="4C3I"/>
<dbReference type="PDBsum" id="4C3J"/>
<dbReference type="PDBsum" id="4V1M"/>
<dbReference type="PDBsum" id="4V1N"/>
<dbReference type="PDBsum" id="4V1O"/>
<dbReference type="PDBsum" id="4X67"/>
<dbReference type="PDBsum" id="4X6A"/>
<dbReference type="PDBsum" id="4Y52"/>
<dbReference type="PDBsum" id="4Y7N"/>
<dbReference type="PDBsum" id="4YM7"/>
<dbReference type="PDBsum" id="5C3E"/>
<dbReference type="PDBsum" id="5C44"/>
<dbReference type="PDBsum" id="5C4A"/>
<dbReference type="PDBsum" id="5C4J"/>
<dbReference type="PDBsum" id="5C4X"/>
<dbReference type="PDBsum" id="5FJ8"/>
<dbReference type="PDBsum" id="5FJ9"/>
<dbReference type="PDBsum" id="5FJA"/>
<dbReference type="PDBsum" id="5FMF"/>
<dbReference type="PDBsum" id="5FYW"/>
<dbReference type="PDBsum" id="5FZ5"/>
<dbReference type="PDBsum" id="5G5L"/>
<dbReference type="PDBsum" id="5IP7"/>
<dbReference type="PDBsum" id="5IP9"/>
<dbReference type="PDBsum" id="5LMX"/>
<dbReference type="PDBsum" id="5M3F"/>
<dbReference type="PDBsum" id="5M3M"/>
<dbReference type="PDBsum" id="5M5W"/>
<dbReference type="PDBsum" id="5M5X"/>
<dbReference type="PDBsum" id="5M5Y"/>
<dbReference type="PDBsum" id="5M64"/>
<dbReference type="PDBsum" id="5N5Y"/>
<dbReference type="PDBsum" id="5N5Z"/>
<dbReference type="PDBsum" id="5N60"/>
<dbReference type="PDBsum" id="5N61"/>
<dbReference type="PDBsum" id="5OA1"/>
<dbReference type="PDBsum" id="5OQJ"/>
<dbReference type="PDBsum" id="5OQM"/>
<dbReference type="PDBsum" id="5OT2"/>
<dbReference type="PDBsum" id="5SVA"/>
<dbReference type="PDBsum" id="5U5Q"/>
<dbReference type="PDBsum" id="5VVR"/>
<dbReference type="PDBsum" id="5VVS"/>
<dbReference type="PDBsum" id="5W4U"/>
<dbReference type="PDBsum" id="5W51"/>
<dbReference type="PDBsum" id="5W5Y"/>
<dbReference type="PDBsum" id="5W64"/>
<dbReference type="PDBsum" id="5W65"/>
<dbReference type="PDBsum" id="5W66"/>
<dbReference type="PDBsum" id="6BLO"/>
<dbReference type="PDBsum" id="6BLP"/>
<dbReference type="PDBsum" id="6BM2"/>
<dbReference type="PDBsum" id="6BM4"/>
<dbReference type="PDBsum" id="6BQF"/>
<dbReference type="PDBsum" id="6CNB"/>
<dbReference type="PDBsum" id="6CNC"/>
<dbReference type="PDBsum" id="6CND"/>
<dbReference type="PDBsum" id="6CNF"/>
<dbReference type="PDBsum" id="6EU0"/>
<dbReference type="PDBsum" id="6EU1"/>
<dbReference type="PDBsum" id="6EU2"/>
<dbReference type="PDBsum" id="6EU3"/>
<dbReference type="PDBsum" id="6F40"/>
<dbReference type="PDBsum" id="6F41"/>
<dbReference type="PDBsum" id="6F42"/>
<dbReference type="PDBsum" id="6F44"/>
<dbReference type="PDBsum" id="6GYK"/>
<dbReference type="PDBsum" id="6GYL"/>
<dbReference type="PDBsum" id="6GYM"/>
<dbReference type="PDBsum" id="6H67"/>
<dbReference type="PDBsum" id="6H68"/>
<dbReference type="PDBsum" id="6HKO"/>
<dbReference type="PDBsum" id="6HLQ"/>
<dbReference type="PDBsum" id="6HLR"/>
<dbReference type="PDBsum" id="6HLS"/>
<dbReference type="PDBsum" id="6I84"/>
<dbReference type="PDBsum" id="6O6C"/>
<dbReference type="PDBsum" id="6RQH"/>
<dbReference type="PDBsum" id="6RQL"/>
<dbReference type="PDBsum" id="6RQT"/>
<dbReference type="PDBsum" id="6RRD"/>
<dbReference type="PDBsum" id="6RUI"/>
<dbReference type="PDBsum" id="6RUO"/>
<dbReference type="PDBsum" id="6RWE"/>
<dbReference type="PDBsum" id="6TPS"/>
<dbReference type="PDBsum" id="6TUT"/>
<dbReference type="PDBsum" id="6UPX"/>
<dbReference type="PDBsum" id="6UPY"/>
<dbReference type="PDBsum" id="6UPZ"/>
<dbReference type="PDBsum" id="6UQ0"/>
<dbReference type="PDBsum" id="6UQ1"/>
<dbReference type="PDBsum" id="6UQ2"/>
<dbReference type="PDBsum" id="6UQ3"/>
<dbReference type="PDBsum" id="7KED"/>
<dbReference type="PDBsum" id="7KEE"/>
<dbReference type="PDBsum" id="7KEF"/>
<dbReference type="PDBsum" id="7MEI"/>
<dbReference type="PDBsum" id="7MK9"/>
<dbReference type="PDBsum" id="7MKA"/>
<dbReference type="PDBsum" id="7ML0"/>
<dbReference type="PDBsum" id="7ML1"/>
<dbReference type="PDBsum" id="7ML2"/>
<dbReference type="PDBsum" id="7ML4"/>
<dbReference type="PDBsum" id="7NKX"/>
<dbReference type="PDBsum" id="7NKY"/>
<dbReference type="PDBsum" id="7O4I"/>
<dbReference type="PDBsum" id="7O4J"/>
<dbReference type="PDBsum" id="7O72"/>
<dbReference type="PDBsum" id="7O73"/>
<dbReference type="PDBsum" id="7O75"/>
<dbReference type="PDBsum" id="7RIM"/>
<dbReference type="PDBsum" id="7RIP"/>
<dbReference type="PDBsum" id="7RIQ"/>
<dbReference type="PDBsum" id="7RIW"/>
<dbReference type="PDBsum" id="7RIX"/>
<dbReference type="PDBsum" id="7RIY"/>
<dbReference type="PDBsum" id="7UI9"/>
<dbReference type="PDBsum" id="7UIF"/>
<dbReference type="PDBsum" id="7UIO"/>
<dbReference type="PDBsum" id="7Z0H"/>
<dbReference type="PDBsum" id="7Z1L"/>
<dbReference type="PDBsum" id="7Z1M"/>
<dbReference type="PDBsum" id="7Z1N"/>
<dbReference type="PDBsum" id="7Z1O"/>
<dbReference type="PDBsum" id="7Z2Z"/>
<dbReference type="PDBsum" id="7Z30"/>
<dbReference type="PDBsum" id="7Z31"/>
<dbReference type="PDBsum" id="7ZS9"/>
<dbReference type="PDBsum" id="7ZSA"/>
<dbReference type="PDBsum" id="7ZSB"/>
<dbReference type="PDBsum" id="8BWS"/>
<dbReference type="PDBsum" id="8CEN"/>
<dbReference type="PDBsum" id="8CEO"/>
<dbReference type="PDBsum" id="8JCH"/>
<dbReference type="PDBsum" id="8K5P"/>
<dbReference type="PDBsum" id="8RAM"/>
<dbReference type="PDBsum" id="8RAP"/>
<dbReference type="PDBsum" id="8TUG"/>
<dbReference type="PDBsum" id="8TVP"/>
<dbReference type="PDBsum" id="8TVQ"/>
<dbReference type="PDBsum" id="8TVS"/>
<dbReference type="PDBsum" id="8TVV"/>
<dbReference type="PDBsum" id="8TVW"/>
<dbReference type="PDBsum" id="8TVX"/>
<dbReference type="PDBsum" id="8TVY"/>
<dbReference type="PDBsum" id="8UKQ"/>
<dbReference type="PDBsum" id="8UKR"/>
<dbReference type="PDBsum" id="8UKS"/>
<dbReference type="PDBsum" id="8UKT"/>
<dbReference type="PDBsum" id="8UKU"/>
<dbReference type="PDBsum" id="8UMH"/>
<dbReference type="PDBsum" id="8UMI"/>
<dbReference type="PDBsum" id="8UOQ"/>
<dbReference type="PDBsum" id="8UOT"/>
<dbReference type="PDBsum" id="9BVT"/>
<dbReference type="PDBsum" id="9BW0"/>
<dbReference type="PDBsum" id="9JA1"/>
<dbReference type="EMDB" id="EMD-0090"/>
<dbReference type="EMDB" id="EMD-0091"/>
<dbReference type="EMDB" id="EMD-0092"/>
<dbReference type="EMDB" id="EMD-0146"/>
<dbReference type="EMDB" id="EMD-0147"/>
<dbReference type="EMDB" id="EMD-0238"/>
<dbReference type="EMDB" id="EMD-0239"/>
<dbReference type="EMDB" id="EMD-0240"/>
<dbReference type="EMDB" id="EMD-0241"/>
<dbReference type="EMDB" id="EMD-0633"/>
<dbReference type="EMDB" id="EMD-10006"/>
<dbReference type="EMDB" id="EMD-10007"/>
<dbReference type="EMDB" id="EMD-10038"/>
<dbReference type="EMDB" id="EMD-10544"/>
<dbReference type="EMDB" id="EMD-10595"/>
<dbReference type="EMDB" id="EMD-12449"/>
<dbReference type="EMDB" id="EMD-12450"/>
<dbReference type="EMDB" id="EMD-12719"/>
<dbReference type="EMDB" id="EMD-12720"/>
<dbReference type="EMDB" id="EMD-12743"/>
<dbReference type="EMDB" id="EMD-12744"/>
<dbReference type="EMDB" id="EMD-12745"/>
<dbReference type="EMDB" id="EMD-14421"/>
<dbReference type="EMDB" id="EMD-14447"/>
<dbReference type="EMDB" id="EMD-14448"/>
<dbReference type="EMDB" id="EMD-14449"/>
<dbReference type="EMDB" id="EMD-14451"/>
<dbReference type="EMDB" id="EMD-14468"/>
<dbReference type="EMDB" id="EMD-14469"/>
<dbReference type="EMDB" id="EMD-14470"/>
<dbReference type="EMDB" id="EMD-14927"/>
<dbReference type="EMDB" id="EMD-14928"/>
<dbReference type="EMDB" id="EMD-14929"/>
<dbReference type="EMDB" id="EMD-16299"/>
<dbReference type="EMDB" id="EMD-16610"/>
<dbReference type="EMDB" id="EMD-16611"/>
<dbReference type="EMDB" id="EMD-19019"/>
<dbReference type="EMDB" id="EMD-19022"/>
<dbReference type="EMDB" id="EMD-26542"/>
<dbReference type="EMDB" id="EMD-26544"/>
<dbReference type="EMDB" id="EMD-26551"/>
<dbReference type="EMDB" id="EMD-2784"/>
<dbReference type="EMDB" id="EMD-2785"/>
<dbReference type="EMDB" id="EMD-2786"/>
<dbReference type="EMDB" id="EMD-3446"/>
<dbReference type="EMDB" id="EMD-3447"/>
<dbReference type="EMDB" id="EMD-3448"/>
<dbReference type="EMDB" id="EMD-3449"/>
<dbReference type="EMDB" id="EMD-3590"/>
<dbReference type="EMDB" id="EMD-3591"/>
<dbReference type="EMDB" id="EMD-3592"/>
<dbReference type="EMDB" id="EMD-3593"/>
<dbReference type="EMDB" id="EMD-36162"/>
<dbReference type="EMDB" id="EMD-36908"/>
<dbReference type="EMDB" id="EMD-3727"/>
<dbReference type="EMDB" id="EMD-3846"/>
<dbReference type="EMDB" id="EMD-3850"/>
<dbReference type="EMDB" id="EMD-3955"/>
<dbReference type="EMDB" id="EMD-3956"/>
<dbReference type="EMDB" id="EMD-3957"/>
<dbReference type="EMDB" id="EMD-3958"/>
<dbReference type="EMDB" id="EMD-4088"/>
<dbReference type="EMDB" id="EMD-4147"/>
<dbReference type="EMDB" id="EMD-4148"/>
<dbReference type="EMDB" id="EMD-4180"/>
<dbReference type="EMDB" id="EMD-4181"/>
<dbReference type="EMDB" id="EMD-4182"/>
<dbReference type="EMDB" id="EMD-4183"/>
<dbReference type="EMDB" id="EMD-42437"/>
<dbReference type="EMDB" id="EMD-42438"/>
<dbReference type="EMDB" id="EMD-4429"/>
<dbReference type="EMDB" id="EMD-4982"/>
<dbReference type="EMDB" id="EMD-4984"/>
<dbReference type="EMDB" id="EMD-4985"/>
<dbReference type="EMDB" id="EMD-4987"/>
<dbReference type="EMDB" id="EMD-61287"/>
<dbReference type="EMDB" id="EMD-7530"/>
<dbReference type="EMDB" id="EMD-7531"/>
<dbReference type="EMDB" id="EMD-7532"/>
<dbReference type="EMDB" id="EMD-7533"/>
<dbReference type="EMDB" id="EMD-8305"/>
<dbReference type="EMDB" id="EMD-8735"/>
<dbReference type="EMDB" id="EMD-8737"/>
<dbReference type="EMDB" id="EMD-8771"/>
<dbReference type="EMDB" id="EMD-8773"/>
<dbReference type="EMDB" id="EMD-8774"/>
<dbReference type="EMDB" id="EMD-8775"/>
<dbReference type="EMDB" id="EMD-8776"/>
<dbReference type="EMDB" id="EMD-8777"/>
<dbReference type="SMR" id="P20434"/>
<dbReference type="BioGRID" id="32853">
    <property type="interactions" value="321"/>
</dbReference>
<dbReference type="ComplexPortal" id="CPX-1664">
    <property type="entry name" value="DNA-directed RNA Polymerase I complex"/>
</dbReference>
<dbReference type="ComplexPortal" id="CPX-2660">
    <property type="entry name" value="DNA-directed RNA polymerase III complex"/>
</dbReference>
<dbReference type="ComplexPortal" id="CPX-2662">
    <property type="entry name" value="DNA-directed RNA polymerase II complex"/>
</dbReference>
<dbReference type="DIP" id="DIP-71N"/>
<dbReference type="FunCoup" id="P20434">
    <property type="interactions" value="1286"/>
</dbReference>
<dbReference type="IntAct" id="P20434">
    <property type="interactions" value="71"/>
</dbReference>
<dbReference type="MINT" id="P20434"/>
<dbReference type="STRING" id="4932.YBR154C"/>
<dbReference type="iPTMnet" id="P20434"/>
<dbReference type="PaxDb" id="4932-YBR154C"/>
<dbReference type="PeptideAtlas" id="P20434"/>
<dbReference type="EnsemblFungi" id="YBR154C_mRNA">
    <property type="protein sequence ID" value="YBR154C"/>
    <property type="gene ID" value="YBR154C"/>
</dbReference>
<dbReference type="GeneID" id="852451"/>
<dbReference type="KEGG" id="sce:YBR154C"/>
<dbReference type="AGR" id="SGD:S000000358"/>
<dbReference type="SGD" id="S000000358">
    <property type="gene designation" value="RPB5"/>
</dbReference>
<dbReference type="VEuPathDB" id="FungiDB:YBR154C"/>
<dbReference type="eggNOG" id="KOG3218">
    <property type="taxonomic scope" value="Eukaryota"/>
</dbReference>
<dbReference type="GeneTree" id="ENSGT00390000013841"/>
<dbReference type="HOGENOM" id="CLU_058320_0_0_1"/>
<dbReference type="InParanoid" id="P20434"/>
<dbReference type="OMA" id="VRDRGYF"/>
<dbReference type="OrthoDB" id="248779at2759"/>
<dbReference type="BioCyc" id="YEAST:G3O-29104-MONOMER"/>
<dbReference type="Reactome" id="R-SCE-113418">
    <property type="pathway name" value="Formation of the Early Elongation Complex"/>
</dbReference>
<dbReference type="Reactome" id="R-SCE-674695">
    <property type="pathway name" value="RNA Polymerase II Pre-transcription Events"/>
</dbReference>
<dbReference type="Reactome" id="R-SCE-6781823">
    <property type="pathway name" value="Formation of TC-NER Pre-Incision Complex"/>
</dbReference>
<dbReference type="Reactome" id="R-SCE-6782135">
    <property type="pathway name" value="Dual incision in TC-NER"/>
</dbReference>
<dbReference type="Reactome" id="R-SCE-6782210">
    <property type="pathway name" value="Gap-filling DNA repair synthesis and ligation in TC-NER"/>
</dbReference>
<dbReference type="Reactome" id="R-SCE-6796648">
    <property type="pathway name" value="TP53 Regulates Transcription of DNA Repair Genes"/>
</dbReference>
<dbReference type="Reactome" id="R-SCE-6807505">
    <property type="pathway name" value="RNA polymerase II transcribes snRNA genes"/>
</dbReference>
<dbReference type="Reactome" id="R-SCE-72086">
    <property type="pathway name" value="mRNA Capping"/>
</dbReference>
<dbReference type="Reactome" id="R-SCE-72203">
    <property type="pathway name" value="Processing of Capped Intron-Containing Pre-mRNA"/>
</dbReference>
<dbReference type="Reactome" id="R-SCE-73762">
    <property type="pathway name" value="RNA Polymerase I Transcription Initiation"/>
</dbReference>
<dbReference type="Reactome" id="R-SCE-73772">
    <property type="pathway name" value="RNA Polymerase I Promoter Escape"/>
</dbReference>
<dbReference type="Reactome" id="R-SCE-73776">
    <property type="pathway name" value="RNA Polymerase II Promoter Escape"/>
</dbReference>
<dbReference type="Reactome" id="R-SCE-73779">
    <property type="pathway name" value="RNA Polymerase II Transcription Pre-Initiation And Promoter Opening"/>
</dbReference>
<dbReference type="Reactome" id="R-SCE-75953">
    <property type="pathway name" value="RNA Polymerase II Transcription Initiation"/>
</dbReference>
<dbReference type="Reactome" id="R-SCE-76042">
    <property type="pathway name" value="RNA Polymerase II Transcription Initiation And Promoter Clearance"/>
</dbReference>
<dbReference type="Reactome" id="R-SCE-76066">
    <property type="pathway name" value="RNA Polymerase III Transcription Initiation From Type 2 Promoter"/>
</dbReference>
<dbReference type="Reactome" id="R-SCE-77075">
    <property type="pathway name" value="RNA Pol II CTD phosphorylation and interaction with CE"/>
</dbReference>
<dbReference type="Reactome" id="R-SCE-9018519">
    <property type="pathway name" value="Estrogen-dependent gene expression"/>
</dbReference>
<dbReference type="BioGRID-ORCS" id="852451">
    <property type="hits" value="3 hits in 10 CRISPR screens"/>
</dbReference>
<dbReference type="EvolutionaryTrace" id="P20434"/>
<dbReference type="PRO" id="PR:P20434"/>
<dbReference type="Proteomes" id="UP000002311">
    <property type="component" value="Chromosome II"/>
</dbReference>
<dbReference type="RNAct" id="P20434">
    <property type="molecule type" value="protein"/>
</dbReference>
<dbReference type="GO" id="GO:0005654">
    <property type="term" value="C:nucleoplasm"/>
    <property type="evidence" value="ECO:0000304"/>
    <property type="project" value="Reactome"/>
</dbReference>
<dbReference type="GO" id="GO:0005634">
    <property type="term" value="C:nucleus"/>
    <property type="evidence" value="ECO:0000314"/>
    <property type="project" value="ComplexPortal"/>
</dbReference>
<dbReference type="GO" id="GO:0005736">
    <property type="term" value="C:RNA polymerase I complex"/>
    <property type="evidence" value="ECO:0000314"/>
    <property type="project" value="UniProtKB"/>
</dbReference>
<dbReference type="GO" id="GO:0005665">
    <property type="term" value="C:RNA polymerase II, core complex"/>
    <property type="evidence" value="ECO:0000314"/>
    <property type="project" value="SGD"/>
</dbReference>
<dbReference type="GO" id="GO:0005666">
    <property type="term" value="C:RNA polymerase III complex"/>
    <property type="evidence" value="ECO:0000314"/>
    <property type="project" value="SGD"/>
</dbReference>
<dbReference type="GO" id="GO:0003677">
    <property type="term" value="F:DNA binding"/>
    <property type="evidence" value="ECO:0007669"/>
    <property type="project" value="UniProtKB-KW"/>
</dbReference>
<dbReference type="GO" id="GO:0003899">
    <property type="term" value="F:DNA-directed RNA polymerase activity"/>
    <property type="evidence" value="ECO:0000314"/>
    <property type="project" value="UniProtKB"/>
</dbReference>
<dbReference type="GO" id="GO:0042790">
    <property type="term" value="P:nucleolar large rRNA transcription by RNA polymerase I"/>
    <property type="evidence" value="ECO:0000314"/>
    <property type="project" value="ComplexPortal"/>
</dbReference>
<dbReference type="GO" id="GO:0042254">
    <property type="term" value="P:ribosome biogenesis"/>
    <property type="evidence" value="ECO:0007669"/>
    <property type="project" value="UniProtKB-KW"/>
</dbReference>
<dbReference type="GO" id="GO:0001172">
    <property type="term" value="P:RNA-templated transcription"/>
    <property type="evidence" value="ECO:0007669"/>
    <property type="project" value="GOC"/>
</dbReference>
<dbReference type="GO" id="GO:0006363">
    <property type="term" value="P:termination of RNA polymerase I transcription"/>
    <property type="evidence" value="ECO:0000314"/>
    <property type="project" value="ComplexPortal"/>
</dbReference>
<dbReference type="GO" id="GO:0006386">
    <property type="term" value="P:termination of RNA polymerase III transcription"/>
    <property type="evidence" value="ECO:0000314"/>
    <property type="project" value="ComplexPortal"/>
</dbReference>
<dbReference type="GO" id="GO:0006360">
    <property type="term" value="P:transcription by RNA polymerase I"/>
    <property type="evidence" value="ECO:0000314"/>
    <property type="project" value="UniProtKB"/>
</dbReference>
<dbReference type="GO" id="GO:0006366">
    <property type="term" value="P:transcription by RNA polymerase II"/>
    <property type="evidence" value="ECO:0000315"/>
    <property type="project" value="SGD"/>
</dbReference>
<dbReference type="GO" id="GO:0006383">
    <property type="term" value="P:transcription by RNA polymerase III"/>
    <property type="evidence" value="ECO:0000314"/>
    <property type="project" value="ComplexPortal"/>
</dbReference>
<dbReference type="GO" id="GO:0006362">
    <property type="term" value="P:transcription elongation by RNA polymerase I"/>
    <property type="evidence" value="ECO:0000314"/>
    <property type="project" value="ComplexPortal"/>
</dbReference>
<dbReference type="GO" id="GO:0006368">
    <property type="term" value="P:transcription elongation by RNA polymerase II"/>
    <property type="evidence" value="ECO:0000314"/>
    <property type="project" value="ComplexPortal"/>
</dbReference>
<dbReference type="GO" id="GO:0006361">
    <property type="term" value="P:transcription initiation at RNA polymerase I promoter"/>
    <property type="evidence" value="ECO:0000314"/>
    <property type="project" value="ComplexPortal"/>
</dbReference>
<dbReference type="GO" id="GO:0006367">
    <property type="term" value="P:transcription initiation at RNA polymerase II promoter"/>
    <property type="evidence" value="ECO:0000314"/>
    <property type="project" value="ComplexPortal"/>
</dbReference>
<dbReference type="GO" id="GO:0006384">
    <property type="term" value="P:transcription initiation at RNA polymerase III promoter"/>
    <property type="evidence" value="ECO:0000314"/>
    <property type="project" value="ComplexPortal"/>
</dbReference>
<dbReference type="GO" id="GO:0042797">
    <property type="term" value="P:tRNA transcription by RNA polymerase III"/>
    <property type="evidence" value="ECO:0000314"/>
    <property type="project" value="SGD"/>
</dbReference>
<dbReference type="FunFam" id="3.40.1340.10:FF:000002">
    <property type="entry name" value="DNA-directed RNA polymerases I, II, and III subunit RPABC1"/>
    <property type="match status" value="1"/>
</dbReference>
<dbReference type="FunFam" id="3.90.940.20:FF:000001">
    <property type="entry name" value="DNA-directed RNA polymerases I, II, and III subunit RPABC1"/>
    <property type="match status" value="1"/>
</dbReference>
<dbReference type="Gene3D" id="3.40.1340.10">
    <property type="entry name" value="RNA polymerase, Rpb5, N-terminal domain"/>
    <property type="match status" value="1"/>
</dbReference>
<dbReference type="Gene3D" id="3.90.940.20">
    <property type="entry name" value="RPB5-like RNA polymerase subunit"/>
    <property type="match status" value="1"/>
</dbReference>
<dbReference type="HAMAP" id="MF_00025">
    <property type="entry name" value="RNApol_Rpo5_RPB5"/>
    <property type="match status" value="1"/>
</dbReference>
<dbReference type="InterPro" id="IPR014381">
    <property type="entry name" value="Arch_Rpo5/euc_Rpb5"/>
</dbReference>
<dbReference type="InterPro" id="IPR005571">
    <property type="entry name" value="RNA_pol_Rpb5_N"/>
</dbReference>
<dbReference type="InterPro" id="IPR036710">
    <property type="entry name" value="RNA_pol_Rpb5_N_sf"/>
</dbReference>
<dbReference type="InterPro" id="IPR000783">
    <property type="entry name" value="RNA_pol_subH/Rpb5_C"/>
</dbReference>
<dbReference type="InterPro" id="IPR020608">
    <property type="entry name" value="RNA_pol_subH/Rpb5_CS"/>
</dbReference>
<dbReference type="InterPro" id="IPR035913">
    <property type="entry name" value="RPB5-like_sf"/>
</dbReference>
<dbReference type="NCBIfam" id="NF007129">
    <property type="entry name" value="PRK09570.1"/>
    <property type="match status" value="1"/>
</dbReference>
<dbReference type="PANTHER" id="PTHR10535">
    <property type="entry name" value="DNA-DIRECTED RNA POLYMERASES I, II, AND III SUBUNIT RPABC1"/>
    <property type="match status" value="1"/>
</dbReference>
<dbReference type="PANTHER" id="PTHR10535:SF0">
    <property type="entry name" value="DNA-DIRECTED RNA POLYMERASES I, II, AND III SUBUNIT RPABC1"/>
    <property type="match status" value="1"/>
</dbReference>
<dbReference type="Pfam" id="PF01191">
    <property type="entry name" value="RNA_pol_Rpb5_C"/>
    <property type="match status" value="1"/>
</dbReference>
<dbReference type="Pfam" id="PF03871">
    <property type="entry name" value="RNA_pol_Rpb5_N"/>
    <property type="match status" value="1"/>
</dbReference>
<dbReference type="PIRSF" id="PIRSF000747">
    <property type="entry name" value="RPB5"/>
    <property type="match status" value="1"/>
</dbReference>
<dbReference type="SUPFAM" id="SSF53036">
    <property type="entry name" value="Eukaryotic RPB5 N-terminal domain"/>
    <property type="match status" value="1"/>
</dbReference>
<dbReference type="SUPFAM" id="SSF55287">
    <property type="entry name" value="RPB5-like RNA polymerase subunit"/>
    <property type="match status" value="1"/>
</dbReference>
<dbReference type="PROSITE" id="PS01110">
    <property type="entry name" value="RNA_POL_H_23KD"/>
    <property type="match status" value="1"/>
</dbReference>
<protein>
    <recommendedName>
        <fullName>DNA-directed RNA polymerases I, II, and III subunit RPABC1</fullName>
        <shortName>RNA polymerases I, II, and III subunit ABC1</shortName>
    </recommendedName>
    <alternativeName>
        <fullName>ABC27</fullName>
    </alternativeName>
    <alternativeName>
        <fullName>DNA-directed RNA polymerases I, II, and III 27 kDa polypeptide</fullName>
    </alternativeName>
</protein>
<feature type="chain" id="PRO_0000146086" description="DNA-directed RNA polymerases I, II, and III subunit RPABC1">
    <location>
        <begin position="1"/>
        <end position="215"/>
    </location>
</feature>
<feature type="sequence conflict" description="In Ref. 2; AAC60556." evidence="10" ref="2">
    <original>L</original>
    <variation>W</variation>
    <location>
        <position position="37"/>
    </location>
</feature>
<feature type="turn" evidence="12">
    <location>
        <begin position="3"/>
        <end position="5"/>
    </location>
</feature>
<feature type="helix" evidence="11">
    <location>
        <begin position="7"/>
        <end position="25"/>
    </location>
</feature>
<feature type="helix" evidence="11">
    <location>
        <begin position="32"/>
        <end position="35"/>
    </location>
</feature>
<feature type="helix" evidence="11">
    <location>
        <begin position="39"/>
        <end position="46"/>
    </location>
</feature>
<feature type="strand" evidence="13">
    <location>
        <begin position="49"/>
        <end position="51"/>
    </location>
</feature>
<feature type="helix" evidence="11">
    <location>
        <begin position="55"/>
        <end position="57"/>
    </location>
</feature>
<feature type="strand" evidence="11">
    <location>
        <begin position="60"/>
        <end position="62"/>
    </location>
</feature>
<feature type="helix" evidence="11">
    <location>
        <begin position="66"/>
        <end position="71"/>
    </location>
</feature>
<feature type="strand" evidence="14">
    <location>
        <begin position="72"/>
        <end position="74"/>
    </location>
</feature>
<feature type="strand" evidence="11">
    <location>
        <begin position="78"/>
        <end position="82"/>
    </location>
</feature>
<feature type="strand" evidence="11">
    <location>
        <begin position="84"/>
        <end position="88"/>
    </location>
</feature>
<feature type="helix" evidence="11">
    <location>
        <begin position="90"/>
        <end position="102"/>
    </location>
</feature>
<feature type="strand" evidence="11">
    <location>
        <begin position="106"/>
        <end position="116"/>
    </location>
</feature>
<feature type="helix" evidence="11">
    <location>
        <begin position="118"/>
        <end position="121"/>
    </location>
</feature>
<feature type="turn" evidence="11">
    <location>
        <begin position="122"/>
        <end position="125"/>
    </location>
</feature>
<feature type="strand" evidence="17">
    <location>
        <begin position="127"/>
        <end position="129"/>
    </location>
</feature>
<feature type="strand" evidence="11">
    <location>
        <begin position="131"/>
        <end position="136"/>
    </location>
</feature>
<feature type="helix" evidence="11">
    <location>
        <begin position="137"/>
        <end position="140"/>
    </location>
</feature>
<feature type="helix" evidence="11">
    <location>
        <begin position="144"/>
        <end position="146"/>
    </location>
</feature>
<feature type="strand" evidence="16">
    <location>
        <begin position="147"/>
        <end position="150"/>
    </location>
</feature>
<feature type="strand" evidence="11">
    <location>
        <begin position="152"/>
        <end position="155"/>
    </location>
</feature>
<feature type="helix" evidence="11">
    <location>
        <begin position="158"/>
        <end position="167"/>
    </location>
</feature>
<feature type="helix" evidence="11">
    <location>
        <begin position="172"/>
        <end position="174"/>
    </location>
</feature>
<feature type="strand" evidence="16">
    <location>
        <begin position="177"/>
        <end position="179"/>
    </location>
</feature>
<feature type="strand" evidence="15">
    <location>
        <begin position="180"/>
        <end position="182"/>
    </location>
</feature>
<feature type="helix" evidence="11">
    <location>
        <begin position="183"/>
        <end position="188"/>
    </location>
</feature>
<feature type="strand" evidence="11">
    <location>
        <begin position="195"/>
        <end position="199"/>
    </location>
</feature>
<feature type="strand" evidence="11">
    <location>
        <begin position="204"/>
        <end position="206"/>
    </location>
</feature>
<feature type="strand" evidence="11">
    <location>
        <begin position="210"/>
        <end position="214"/>
    </location>
</feature>